<sequence length="1427" mass="153604">MHQRHPRARCPPLCVAGILACGFLLGCWGPSHFQQSCLQALEPQAVSSYLSPGAPLKGRPPSPGFQRQRQRQRRAAGGILHLELLVAVGPDVFQAHQEDTERYVLTNLNIGAELLRDPSLGAQFRVHLVKMVILTEPEGAPNITANLTSSLLSVCGWSQTINPEDDTDPGHADLVLYITRFDLELPDGNRQVRGVTQLGGACSPTWSCLITEDTGFDLGVTIAHEIGHSFGLEHDGAPGSGCGPSGHVMASDGAAPRAGLAWSPCSRRQLLSLLSAGRARCVWDPPRPQPGSAGHPPDAQPGLYYSANEQCRVAFGPKAVACTFAREHLDMCQALSCHTDPLDQSSCSRLLVPLLDGTECGVEKWCSKGRCRSLVELTPIAAVHGRWSSWGPRSPCSRSCGGGVVTRRRQCNNPRPAFGGRACVGADLQAEMCNTQACEKTQLEFMSQQCARTDGQPLRSSPGGASFYHWGAAVPHSQGDALCRHMCRAIGESFIMKRGDSFLDGTRCMPSGPREDGTLSLCVSGSCRTFGCDGRMDSQQVWDRCQVCGGDNSTCSPRKGSFTAGRAREYVTFLTVTPNLTSVYIANHRPLFTHLAVRIGGRYVVAGKMSISPNTTYPSLLEDGRVEYRVALTEDRLPRLEEIRIWGPLQEDADIQVYRRYGEEYGNLTRPDITFTYFQPKPRQAWVWAAVRGPCSVSCGAGLRWVNYSCLDQARKELVETVQCQGSQQPPAWPEACVLEPCPPYWAVGDFGPCSASCGGGLRERPVRCVEAQGSLLKTLPPARCRAGAQQPAVALETCNPQPCPARWEVSEPSSCTSAGGAGLALENETCVPGADGLEAPVTEGPGSVDEKLPAPEPCVGMSCPPGWGHLDATSAGEKAPSPWGSIRTGAQAAHVWTPAAGSCSVSCGRGLMELRFLCMDSALRVPVQEELCGLASKPGSRREVCQAVPCPARWQYKLAACSVSCGRGVVRRILYCARAHGEDDGEEILLDTQCQGLPRPEPQEACSLEPCPPRWKVMSLGPCSASCGLGTARRSVACVQLDQGQDVEVDEAACAALVRPEASVPCLIADCTYRWHVGTWMECSVSCGDGIQRRRDTCLGPQAQAPVPADFCQHLPKPVTVRGCWAGPCVGQGTPSLVPHEEAAAPGRTTATPAGASLEWSQARGLLFSPAPQPRRLLPGPQENSVQSSACGRQHLEPTGTIDMRGPGQADCAVAIGRPLGEVVTLRVLESSLNCSAGDMLLLWGRLTWRKMCRKLLDMTFSSKTNTLVVRQRCGRPGGGVLLRYGSQLAPETFYRECDMQLFGPWGEIVSPSLSPATSNAGGCRLFINVAPHARIAIHALATNMGAGTEGANASYILIRDTHSLRTTAFHGQQVLYWESESSQAEMEFSEGFLKAQASLRGQYWTLQSWVPEMQDPQSWKGKEGT</sequence>
<dbReference type="EC" id="3.4.24.87" evidence="9"/>
<dbReference type="EMBL" id="AB069698">
    <property type="protein sequence ID" value="BAB69487.2"/>
    <property type="molecule type" value="mRNA"/>
</dbReference>
<dbReference type="EMBL" id="AY055376">
    <property type="protein sequence ID" value="AAL17652.1"/>
    <property type="molecule type" value="mRNA"/>
</dbReference>
<dbReference type="EMBL" id="AF414401">
    <property type="protein sequence ID" value="AAL11095.1"/>
    <property type="molecule type" value="mRNA"/>
</dbReference>
<dbReference type="EMBL" id="AJ305314">
    <property type="protein sequence ID" value="CAC83682.1"/>
    <property type="molecule type" value="mRNA"/>
</dbReference>
<dbReference type="EMBL" id="AJ420810">
    <property type="protein sequence ID" value="CAD12729.1"/>
    <property type="molecule type" value="mRNA"/>
</dbReference>
<dbReference type="EMBL" id="AJ011374">
    <property type="protein sequence ID" value="CAB66157.1"/>
    <property type="molecule type" value="mRNA"/>
</dbReference>
<dbReference type="EMBL" id="DQ422807">
    <property type="protein sequence ID" value="ABD72606.1"/>
    <property type="molecule type" value="Genomic_DNA"/>
</dbReference>
<dbReference type="EMBL" id="AL158826">
    <property type="protein sequence ID" value="CAI12850.1"/>
    <property type="molecule type" value="Genomic_DNA"/>
</dbReference>
<dbReference type="EMBL" id="AL593848">
    <property type="protein sequence ID" value="CAI12850.1"/>
    <property type="status" value="JOINED"/>
    <property type="molecule type" value="Genomic_DNA"/>
</dbReference>
<dbReference type="EMBL" id="AL158826">
    <property type="protein sequence ID" value="CAI12851.1"/>
    <property type="molecule type" value="Genomic_DNA"/>
</dbReference>
<dbReference type="EMBL" id="AL593848">
    <property type="protein sequence ID" value="CAI12851.1"/>
    <property type="status" value="JOINED"/>
    <property type="molecule type" value="Genomic_DNA"/>
</dbReference>
<dbReference type="EMBL" id="AL158826">
    <property type="protein sequence ID" value="CAI12852.1"/>
    <property type="molecule type" value="Genomic_DNA"/>
</dbReference>
<dbReference type="EMBL" id="AL593848">
    <property type="protein sequence ID" value="CAI12852.1"/>
    <property type="status" value="JOINED"/>
    <property type="molecule type" value="Genomic_DNA"/>
</dbReference>
<dbReference type="EMBL" id="CH471090">
    <property type="protein sequence ID" value="EAW88086.1"/>
    <property type="molecule type" value="Genomic_DNA"/>
</dbReference>
<dbReference type="EMBL" id="AY358118">
    <property type="protein sequence ID" value="AAQ88485.1"/>
    <property type="status" value="ALT_INIT"/>
    <property type="molecule type" value="mRNA"/>
</dbReference>
<dbReference type="EMBL" id="AL136809">
    <property type="protein sequence ID" value="CAB66743.1"/>
    <property type="status" value="ALT_INIT"/>
    <property type="molecule type" value="mRNA"/>
</dbReference>
<dbReference type="CCDS" id="CCDS6970.1">
    <molecule id="Q76LX8-1"/>
</dbReference>
<dbReference type="CCDS" id="CCDS6971.1">
    <molecule id="Q76LX8-3"/>
</dbReference>
<dbReference type="CCDS" id="CCDS6972.1">
    <molecule id="Q76LX8-2"/>
</dbReference>
<dbReference type="RefSeq" id="NP_620594.1">
    <molecule id="Q76LX8-1"/>
    <property type="nucleotide sequence ID" value="NM_139025.5"/>
</dbReference>
<dbReference type="RefSeq" id="NP_620595.1">
    <molecule id="Q76LX8-3"/>
    <property type="nucleotide sequence ID" value="NM_139026.6"/>
</dbReference>
<dbReference type="RefSeq" id="NP_620596.2">
    <molecule id="Q76LX8-2"/>
    <property type="nucleotide sequence ID" value="NM_139027.6"/>
</dbReference>
<dbReference type="PDB" id="3GHM">
    <property type="method" value="X-ray"/>
    <property type="resolution" value="2.60 A"/>
    <property type="chains" value="A=287-685"/>
</dbReference>
<dbReference type="PDB" id="3GHN">
    <property type="method" value="X-ray"/>
    <property type="resolution" value="2.80 A"/>
    <property type="chains" value="A=287-685"/>
</dbReference>
<dbReference type="PDB" id="3VN4">
    <property type="method" value="X-ray"/>
    <property type="resolution" value="2.80 A"/>
    <property type="chains" value="A=287-685"/>
</dbReference>
<dbReference type="PDB" id="6QIG">
    <property type="method" value="X-ray"/>
    <property type="resolution" value="2.80 A"/>
    <property type="chains" value="A=79-682"/>
</dbReference>
<dbReference type="PDB" id="7B01">
    <property type="method" value="X-ray"/>
    <property type="resolution" value="2.80 A"/>
    <property type="chains" value="A=1185-1427"/>
</dbReference>
<dbReference type="PDBsum" id="3GHM"/>
<dbReference type="PDBsum" id="3GHN"/>
<dbReference type="PDBsum" id="3VN4"/>
<dbReference type="PDBsum" id="6QIG"/>
<dbReference type="PDBsum" id="7B01"/>
<dbReference type="SASBDB" id="Q76LX8"/>
<dbReference type="SMR" id="Q76LX8"/>
<dbReference type="BioGRID" id="116274">
    <property type="interactions" value="24"/>
</dbReference>
<dbReference type="DIP" id="DIP-36050N"/>
<dbReference type="FunCoup" id="Q76LX8">
    <property type="interactions" value="15"/>
</dbReference>
<dbReference type="IntAct" id="Q76LX8">
    <property type="interactions" value="25"/>
</dbReference>
<dbReference type="STRING" id="9606.ENSP00000360997"/>
<dbReference type="BindingDB" id="Q76LX8"/>
<dbReference type="ChEMBL" id="CHEMBL2346492"/>
<dbReference type="DrugBank" id="DB13133">
    <property type="generic name" value="Von Willebrand factor human"/>
</dbReference>
<dbReference type="DrugBank" id="DB12872">
    <property type="generic name" value="Vonicog alfa"/>
</dbReference>
<dbReference type="MEROPS" id="M12.241"/>
<dbReference type="GlyConnect" id="637">
    <property type="glycosylation" value="10 N-Linked glycans (5 sites), 1 O-Fuc glycan (3 sites)"/>
</dbReference>
<dbReference type="GlyCosmos" id="Q76LX8">
    <property type="glycosylation" value="27 sites, 14 glycans"/>
</dbReference>
<dbReference type="GlyGen" id="Q76LX8">
    <property type="glycosylation" value="32 sites, 10 N-linked glycans (5 sites), 4 O-linked glycans (9 sites)"/>
</dbReference>
<dbReference type="iPTMnet" id="Q76LX8"/>
<dbReference type="PhosphoSitePlus" id="Q76LX8"/>
<dbReference type="BioMuta" id="ADAMTS13"/>
<dbReference type="DMDM" id="74749836"/>
<dbReference type="jPOST" id="Q76LX8"/>
<dbReference type="MassIVE" id="Q76LX8"/>
<dbReference type="PaxDb" id="9606-ENSP00000360997"/>
<dbReference type="PeptideAtlas" id="Q76LX8"/>
<dbReference type="ProteomicsDB" id="68682">
    <molecule id="Q76LX8-1"/>
</dbReference>
<dbReference type="ProteomicsDB" id="68683">
    <molecule id="Q76LX8-2"/>
</dbReference>
<dbReference type="ProteomicsDB" id="68684">
    <molecule id="Q76LX8-3"/>
</dbReference>
<dbReference type="ProteomicsDB" id="84255"/>
<dbReference type="ABCD" id="Q76LX8">
    <property type="antibodies" value="90 sequenced antibodies"/>
</dbReference>
<dbReference type="Antibodypedia" id="31871">
    <property type="antibodies" value="534 antibodies from 36 providers"/>
</dbReference>
<dbReference type="DNASU" id="11093"/>
<dbReference type="Ensembl" id="ENST00000355699.7">
    <molecule id="Q76LX8-2"/>
    <property type="protein sequence ID" value="ENSP00000347927.2"/>
    <property type="gene ID" value="ENSG00000160323.19"/>
</dbReference>
<dbReference type="Ensembl" id="ENST00000356589.6">
    <molecule id="Q76LX8-3"/>
    <property type="protein sequence ID" value="ENSP00000348997.2"/>
    <property type="gene ID" value="ENSG00000160323.19"/>
</dbReference>
<dbReference type="Ensembl" id="ENST00000371929.7">
    <molecule id="Q76LX8-1"/>
    <property type="protein sequence ID" value="ENSP00000360997.3"/>
    <property type="gene ID" value="ENSG00000160323.19"/>
</dbReference>
<dbReference type="Ensembl" id="ENST00000626597.2">
    <molecule id="Q76LX8-1"/>
    <property type="protein sequence ID" value="ENSP00000486201.1"/>
    <property type="gene ID" value="ENSG00000281244.2"/>
</dbReference>
<dbReference type="Ensembl" id="ENST00000626744.2">
    <molecule id="Q76LX8-2"/>
    <property type="protein sequence ID" value="ENSP00000486734.1"/>
    <property type="gene ID" value="ENSG00000281244.2"/>
</dbReference>
<dbReference type="Ensembl" id="ENST00000630465.2">
    <molecule id="Q76LX8-3"/>
    <property type="protein sequence ID" value="ENSP00000485989.1"/>
    <property type="gene ID" value="ENSG00000281244.2"/>
</dbReference>
<dbReference type="GeneID" id="11093"/>
<dbReference type="KEGG" id="hsa:11093"/>
<dbReference type="MANE-Select" id="ENST00000355699.7">
    <molecule id="Q76LX8-2"/>
    <property type="protein sequence ID" value="ENSP00000347927.2"/>
    <property type="RefSeq nucleotide sequence ID" value="NM_139027.6"/>
    <property type="RefSeq protein sequence ID" value="NP_620596.2"/>
</dbReference>
<dbReference type="UCSC" id="uc004cdv.6">
    <molecule id="Q76LX8-1"/>
    <property type="organism name" value="human"/>
</dbReference>
<dbReference type="AGR" id="HGNC:1366"/>
<dbReference type="CTD" id="11093"/>
<dbReference type="DisGeNET" id="11093"/>
<dbReference type="GeneCards" id="ADAMTS13"/>
<dbReference type="HGNC" id="HGNC:1366">
    <property type="gene designation" value="ADAMTS13"/>
</dbReference>
<dbReference type="HPA" id="ENSG00000160323">
    <property type="expression patterns" value="Tissue enhanced (liver)"/>
</dbReference>
<dbReference type="MalaCards" id="ADAMTS13"/>
<dbReference type="MIM" id="274150">
    <property type="type" value="phenotype"/>
</dbReference>
<dbReference type="MIM" id="604134">
    <property type="type" value="gene"/>
</dbReference>
<dbReference type="neXtProt" id="NX_Q76LX8"/>
<dbReference type="OpenTargets" id="ENSG00000160323"/>
<dbReference type="Orphanet" id="93583">
    <property type="disease" value="Congenital thrombotic thrombocytopenic purpura"/>
</dbReference>
<dbReference type="PharmGKB" id="PA24539"/>
<dbReference type="VEuPathDB" id="HostDB:ENSG00000160323"/>
<dbReference type="eggNOG" id="KOG3538">
    <property type="taxonomic scope" value="Eukaryota"/>
</dbReference>
<dbReference type="GeneTree" id="ENSGT00940000158379"/>
<dbReference type="HOGENOM" id="CLU_000660_10_1_1"/>
<dbReference type="InParanoid" id="Q76LX8"/>
<dbReference type="OMA" id="PDVHQAH"/>
<dbReference type="OrthoDB" id="9942326at2759"/>
<dbReference type="PAN-GO" id="Q76LX8">
    <property type="GO annotations" value="3 GO annotations based on evolutionary models"/>
</dbReference>
<dbReference type="PhylomeDB" id="Q76LX8"/>
<dbReference type="TreeFam" id="TF313537"/>
<dbReference type="BRENDA" id="3.4.24.87">
    <property type="organism ID" value="2681"/>
</dbReference>
<dbReference type="PathwayCommons" id="Q76LX8"/>
<dbReference type="Reactome" id="R-HSA-5083635">
    <property type="pathway name" value="Defective B3GALTL causes PpS"/>
</dbReference>
<dbReference type="Reactome" id="R-HSA-5173214">
    <property type="pathway name" value="O-glycosylation of TSR domain-containing proteins"/>
</dbReference>
<dbReference type="Reactome" id="R-HSA-75892">
    <property type="pathway name" value="Platelet Adhesion to exposed collagen"/>
</dbReference>
<dbReference type="Reactome" id="R-HSA-9845619">
    <property type="pathway name" value="Enhanced cleavage of VWF variant by ADAMTS13"/>
</dbReference>
<dbReference type="Reactome" id="R-HSA-9845621">
    <property type="pathway name" value="Defective VWF cleavage by ADAMTS13 variant"/>
</dbReference>
<dbReference type="SignaLink" id="Q76LX8"/>
<dbReference type="SIGNOR" id="Q76LX8"/>
<dbReference type="BioGRID-ORCS" id="11093">
    <property type="hits" value="10 hits in 1152 CRISPR screens"/>
</dbReference>
<dbReference type="ChiTaRS" id="ADAMTS13">
    <property type="organism name" value="human"/>
</dbReference>
<dbReference type="EvolutionaryTrace" id="Q76LX8"/>
<dbReference type="GeneWiki" id="ADAMTS13"/>
<dbReference type="GenomeRNAi" id="11093"/>
<dbReference type="Pharos" id="Q76LX8">
    <property type="development level" value="Tbio"/>
</dbReference>
<dbReference type="PRO" id="PR:Q76LX8"/>
<dbReference type="Proteomes" id="UP000005640">
    <property type="component" value="Chromosome 9"/>
</dbReference>
<dbReference type="RNAct" id="Q76LX8">
    <property type="molecule type" value="protein"/>
</dbReference>
<dbReference type="Bgee" id="ENSG00000160323">
    <property type="expression patterns" value="Expressed in right lobe of liver and 95 other cell types or tissues"/>
</dbReference>
<dbReference type="ExpressionAtlas" id="Q76LX8">
    <property type="expression patterns" value="baseline and differential"/>
</dbReference>
<dbReference type="GO" id="GO:0009986">
    <property type="term" value="C:cell surface"/>
    <property type="evidence" value="ECO:0000303"/>
    <property type="project" value="UniProtKB"/>
</dbReference>
<dbReference type="GO" id="GO:0005788">
    <property type="term" value="C:endoplasmic reticulum lumen"/>
    <property type="evidence" value="ECO:0000304"/>
    <property type="project" value="Reactome"/>
</dbReference>
<dbReference type="GO" id="GO:0031012">
    <property type="term" value="C:extracellular matrix"/>
    <property type="evidence" value="ECO:0000318"/>
    <property type="project" value="GO_Central"/>
</dbReference>
<dbReference type="GO" id="GO:0005576">
    <property type="term" value="C:extracellular region"/>
    <property type="evidence" value="ECO:0000304"/>
    <property type="project" value="Reactome"/>
</dbReference>
<dbReference type="GO" id="GO:0005615">
    <property type="term" value="C:extracellular space"/>
    <property type="evidence" value="ECO:0007669"/>
    <property type="project" value="Ensembl"/>
</dbReference>
<dbReference type="GO" id="GO:0005509">
    <property type="term" value="F:calcium ion binding"/>
    <property type="evidence" value="ECO:0000304"/>
    <property type="project" value="UniProtKB"/>
</dbReference>
<dbReference type="GO" id="GO:0005178">
    <property type="term" value="F:integrin binding"/>
    <property type="evidence" value="ECO:0000304"/>
    <property type="project" value="UniProtKB"/>
</dbReference>
<dbReference type="GO" id="GO:0004222">
    <property type="term" value="F:metalloendopeptidase activity"/>
    <property type="evidence" value="ECO:0000269"/>
    <property type="project" value="Reactome"/>
</dbReference>
<dbReference type="GO" id="GO:0008237">
    <property type="term" value="F:metallopeptidase activity"/>
    <property type="evidence" value="ECO:0000304"/>
    <property type="project" value="UniProtKB"/>
</dbReference>
<dbReference type="GO" id="GO:0008270">
    <property type="term" value="F:zinc ion binding"/>
    <property type="evidence" value="ECO:0000304"/>
    <property type="project" value="UniProtKB"/>
</dbReference>
<dbReference type="GO" id="GO:0007596">
    <property type="term" value="P:blood coagulation"/>
    <property type="evidence" value="ECO:0000304"/>
    <property type="project" value="Reactome"/>
</dbReference>
<dbReference type="GO" id="GO:0007160">
    <property type="term" value="P:cell-matrix adhesion"/>
    <property type="evidence" value="ECO:0000303"/>
    <property type="project" value="UniProtKB"/>
</dbReference>
<dbReference type="GO" id="GO:0071353">
    <property type="term" value="P:cellular response to interleukin-4"/>
    <property type="evidence" value="ECO:0007669"/>
    <property type="project" value="Ensembl"/>
</dbReference>
<dbReference type="GO" id="GO:0071222">
    <property type="term" value="P:cellular response to lipopolysaccharide"/>
    <property type="evidence" value="ECO:0007669"/>
    <property type="project" value="Ensembl"/>
</dbReference>
<dbReference type="GO" id="GO:0071356">
    <property type="term" value="P:cellular response to tumor necrosis factor"/>
    <property type="evidence" value="ECO:0007669"/>
    <property type="project" value="Ensembl"/>
</dbReference>
<dbReference type="GO" id="GO:0071346">
    <property type="term" value="P:cellular response to type II interferon"/>
    <property type="evidence" value="ECO:0007669"/>
    <property type="project" value="Ensembl"/>
</dbReference>
<dbReference type="GO" id="GO:0030198">
    <property type="term" value="P:extracellular matrix organization"/>
    <property type="evidence" value="ECO:0000318"/>
    <property type="project" value="GO_Central"/>
</dbReference>
<dbReference type="GO" id="GO:0009100">
    <property type="term" value="P:glycoprotein metabolic process"/>
    <property type="evidence" value="ECO:0000303"/>
    <property type="project" value="UniProtKB"/>
</dbReference>
<dbReference type="GO" id="GO:0007229">
    <property type="term" value="P:integrin-mediated signaling pathway"/>
    <property type="evidence" value="ECO:0000303"/>
    <property type="project" value="UniProtKB"/>
</dbReference>
<dbReference type="GO" id="GO:0043171">
    <property type="term" value="P:peptide catabolic process"/>
    <property type="evidence" value="ECO:0000314"/>
    <property type="project" value="UniProtKB"/>
</dbReference>
<dbReference type="GO" id="GO:0030168">
    <property type="term" value="P:platelet activation"/>
    <property type="evidence" value="ECO:0000303"/>
    <property type="project" value="UniProtKB"/>
</dbReference>
<dbReference type="GO" id="GO:0030163">
    <property type="term" value="P:protein catabolic process"/>
    <property type="evidence" value="ECO:0007669"/>
    <property type="project" value="Ensembl"/>
</dbReference>
<dbReference type="GO" id="GO:0016485">
    <property type="term" value="P:protein processing"/>
    <property type="evidence" value="ECO:0000304"/>
    <property type="project" value="UniProtKB"/>
</dbReference>
<dbReference type="GO" id="GO:0006508">
    <property type="term" value="P:proteolysis"/>
    <property type="evidence" value="ECO:0000314"/>
    <property type="project" value="UniProtKB"/>
</dbReference>
<dbReference type="GO" id="GO:0014075">
    <property type="term" value="P:response to amine"/>
    <property type="evidence" value="ECO:0007669"/>
    <property type="project" value="Ensembl"/>
</dbReference>
<dbReference type="GO" id="GO:0035864">
    <property type="term" value="P:response to potassium ion"/>
    <property type="evidence" value="ECO:0007669"/>
    <property type="project" value="Ensembl"/>
</dbReference>
<dbReference type="GO" id="GO:0009636">
    <property type="term" value="P:response to toxic substance"/>
    <property type="evidence" value="ECO:0007669"/>
    <property type="project" value="Ensembl"/>
</dbReference>
<dbReference type="CDD" id="cd04273">
    <property type="entry name" value="ZnMc_ADAMTS_like"/>
    <property type="match status" value="1"/>
</dbReference>
<dbReference type="FunFam" id="3.40.1620.60:FF:000001">
    <property type="entry name" value="A disintegrin and metalloproteinase with thrombospondin motifs 3"/>
    <property type="match status" value="1"/>
</dbReference>
<dbReference type="FunFam" id="2.60.120.830:FF:000003">
    <property type="entry name" value="ADAM metallopeptidase with thrombospondin type 1 motif 13"/>
    <property type="match status" value="1"/>
</dbReference>
<dbReference type="FunFam" id="2.20.100.10:FF:000005">
    <property type="entry name" value="ADAM metallopeptidase with thrombospondin type 1 motif 9"/>
    <property type="match status" value="1"/>
</dbReference>
<dbReference type="FunFam" id="3.40.390.10:FF:000044">
    <property type="entry name" value="ADAM metallopeptidase with thrombospondin type 1 motif, 13"/>
    <property type="match status" value="1"/>
</dbReference>
<dbReference type="FunFam" id="2.20.100.10:FF:000009">
    <property type="entry name" value="ADAMTS-like protein 3 isoform A"/>
    <property type="match status" value="1"/>
</dbReference>
<dbReference type="FunFam" id="2.20.100.10:FF:000001">
    <property type="entry name" value="semaphorin-5A isoform X1"/>
    <property type="match status" value="1"/>
</dbReference>
<dbReference type="Gene3D" id="2.60.120.830">
    <property type="match status" value="1"/>
</dbReference>
<dbReference type="Gene3D" id="3.40.1620.60">
    <property type="match status" value="1"/>
</dbReference>
<dbReference type="Gene3D" id="3.40.390.10">
    <property type="entry name" value="Collagenase (Catalytic Domain)"/>
    <property type="match status" value="1"/>
</dbReference>
<dbReference type="Gene3D" id="2.20.100.10">
    <property type="entry name" value="Thrombospondin type-1 (TSP1) repeat"/>
    <property type="match status" value="5"/>
</dbReference>
<dbReference type="InterPro" id="IPR006586">
    <property type="entry name" value="ADAM_Cys-rich"/>
</dbReference>
<dbReference type="InterPro" id="IPR013273">
    <property type="entry name" value="ADAMTS/ADAMTS-like"/>
</dbReference>
<dbReference type="InterPro" id="IPR050439">
    <property type="entry name" value="ADAMTS_ADAMTS-like"/>
</dbReference>
<dbReference type="InterPro" id="IPR041645">
    <property type="entry name" value="ADAMTS_CR_2"/>
</dbReference>
<dbReference type="InterPro" id="IPR045371">
    <property type="entry name" value="ADAMTS_CR_3"/>
</dbReference>
<dbReference type="InterPro" id="IPR010294">
    <property type="entry name" value="ADAMTS_spacer1"/>
</dbReference>
<dbReference type="InterPro" id="IPR024079">
    <property type="entry name" value="MetalloPept_cat_dom_sf"/>
</dbReference>
<dbReference type="InterPro" id="IPR001590">
    <property type="entry name" value="Peptidase_M12B"/>
</dbReference>
<dbReference type="InterPro" id="IPR035914">
    <property type="entry name" value="Sperma_CUB_dom_sf"/>
</dbReference>
<dbReference type="InterPro" id="IPR000884">
    <property type="entry name" value="TSP1_rpt"/>
</dbReference>
<dbReference type="InterPro" id="IPR036383">
    <property type="entry name" value="TSP1_rpt_sf"/>
</dbReference>
<dbReference type="PANTHER" id="PTHR13723">
    <property type="entry name" value="ADAMTS A DISINTEGRIN AND METALLOPROTEASE WITH THROMBOSPONDIN MOTIFS PROTEASE"/>
    <property type="match status" value="1"/>
</dbReference>
<dbReference type="PANTHER" id="PTHR13723:SF281">
    <property type="entry name" value="PAPILIN"/>
    <property type="match status" value="1"/>
</dbReference>
<dbReference type="Pfam" id="PF17771">
    <property type="entry name" value="ADAMTS_CR_2"/>
    <property type="match status" value="1"/>
</dbReference>
<dbReference type="Pfam" id="PF19236">
    <property type="entry name" value="ADAMTS_CR_3"/>
    <property type="match status" value="1"/>
</dbReference>
<dbReference type="Pfam" id="PF05986">
    <property type="entry name" value="ADAMTS_spacer1"/>
    <property type="match status" value="1"/>
</dbReference>
<dbReference type="Pfam" id="PF01421">
    <property type="entry name" value="Reprolysin"/>
    <property type="match status" value="1"/>
</dbReference>
<dbReference type="Pfam" id="PF19030">
    <property type="entry name" value="TSP1_ADAMTS"/>
    <property type="match status" value="4"/>
</dbReference>
<dbReference type="Pfam" id="PF00090">
    <property type="entry name" value="TSP_1"/>
    <property type="match status" value="1"/>
</dbReference>
<dbReference type="PRINTS" id="PR01857">
    <property type="entry name" value="ADAMTSFAMILY"/>
</dbReference>
<dbReference type="SMART" id="SM00608">
    <property type="entry name" value="ACR"/>
    <property type="match status" value="1"/>
</dbReference>
<dbReference type="SMART" id="SM00209">
    <property type="entry name" value="TSP1"/>
    <property type="match status" value="7"/>
</dbReference>
<dbReference type="SUPFAM" id="SSF55486">
    <property type="entry name" value="Metalloproteases ('zincins'), catalytic domain"/>
    <property type="match status" value="1"/>
</dbReference>
<dbReference type="SUPFAM" id="SSF49854">
    <property type="entry name" value="Spermadhesin, CUB domain"/>
    <property type="match status" value="2"/>
</dbReference>
<dbReference type="SUPFAM" id="SSF82895">
    <property type="entry name" value="TSP-1 type 1 repeat"/>
    <property type="match status" value="5"/>
</dbReference>
<dbReference type="PROSITE" id="PS50215">
    <property type="entry name" value="ADAM_MEPRO"/>
    <property type="match status" value="1"/>
</dbReference>
<dbReference type="PROSITE" id="PS50092">
    <property type="entry name" value="TSP1"/>
    <property type="match status" value="4"/>
</dbReference>
<dbReference type="PROSITE" id="PS00142">
    <property type="entry name" value="ZINC_PROTEASE"/>
    <property type="match status" value="1"/>
</dbReference>
<gene>
    <name type="primary">ADAMTS13</name>
    <name type="synonym">C9orf8</name>
    <name type="ORF">UNQ6102/PRO20085</name>
</gene>
<evidence type="ECO:0000250" key="1"/>
<evidence type="ECO:0000250" key="2">
    <source>
        <dbReference type="UniProtKB" id="Q9UNA0"/>
    </source>
</evidence>
<evidence type="ECO:0000255" key="3"/>
<evidence type="ECO:0000255" key="4">
    <source>
        <dbReference type="PROSITE-ProRule" id="PRU00210"/>
    </source>
</evidence>
<evidence type="ECO:0000255" key="5">
    <source>
        <dbReference type="PROSITE-ProRule" id="PRU00276"/>
    </source>
</evidence>
<evidence type="ECO:0000255" key="6">
    <source>
        <dbReference type="PROSITE-ProRule" id="PRU10095"/>
    </source>
</evidence>
<evidence type="ECO:0000256" key="7">
    <source>
        <dbReference type="SAM" id="MobiDB-lite"/>
    </source>
</evidence>
<evidence type="ECO:0000269" key="8">
    <source>
    </source>
</evidence>
<evidence type="ECO:0000269" key="9">
    <source>
    </source>
</evidence>
<evidence type="ECO:0000269" key="10">
    <source>
    </source>
</evidence>
<evidence type="ECO:0000269" key="11">
    <source>
    </source>
</evidence>
<evidence type="ECO:0000269" key="12">
    <source>
    </source>
</evidence>
<evidence type="ECO:0000269" key="13">
    <source>
    </source>
</evidence>
<evidence type="ECO:0000269" key="14">
    <source>
    </source>
</evidence>
<evidence type="ECO:0000269" key="15">
    <source>
    </source>
</evidence>
<evidence type="ECO:0000269" key="16">
    <source>
    </source>
</evidence>
<evidence type="ECO:0000269" key="17">
    <source>
    </source>
</evidence>
<evidence type="ECO:0000269" key="18">
    <source>
    </source>
</evidence>
<evidence type="ECO:0000269" key="19">
    <source>
    </source>
</evidence>
<evidence type="ECO:0000269" key="20">
    <source>
    </source>
</evidence>
<evidence type="ECO:0000269" key="21">
    <source>
    </source>
</evidence>
<evidence type="ECO:0000269" key="22">
    <source>
    </source>
</evidence>
<evidence type="ECO:0000269" key="23">
    <source>
    </source>
</evidence>
<evidence type="ECO:0000269" key="24">
    <source>
    </source>
</evidence>
<evidence type="ECO:0000269" key="25">
    <source>
    </source>
</evidence>
<evidence type="ECO:0000269" key="26">
    <source>
    </source>
</evidence>
<evidence type="ECO:0000269" key="27">
    <source>
    </source>
</evidence>
<evidence type="ECO:0000269" key="28">
    <source>
    </source>
</evidence>
<evidence type="ECO:0000269" key="29">
    <source>
    </source>
</evidence>
<evidence type="ECO:0000269" key="30">
    <source>
    </source>
</evidence>
<evidence type="ECO:0000269" key="31">
    <source>
    </source>
</evidence>
<evidence type="ECO:0000269" key="32">
    <source>
    </source>
</evidence>
<evidence type="ECO:0000269" key="33">
    <source>
    </source>
</evidence>
<evidence type="ECO:0000269" key="34">
    <source>
    </source>
</evidence>
<evidence type="ECO:0000269" key="35">
    <source>
    </source>
</evidence>
<evidence type="ECO:0000269" key="36">
    <source>
    </source>
</evidence>
<evidence type="ECO:0000269" key="37">
    <source>
    </source>
</evidence>
<evidence type="ECO:0000269" key="38">
    <source>
    </source>
</evidence>
<evidence type="ECO:0000269" key="39">
    <source>
    </source>
</evidence>
<evidence type="ECO:0000269" key="40">
    <source>
    </source>
</evidence>
<evidence type="ECO:0000269" key="41">
    <source>
    </source>
</evidence>
<evidence type="ECO:0000269" key="42">
    <source>
    </source>
</evidence>
<evidence type="ECO:0000269" key="43">
    <source ref="6"/>
</evidence>
<evidence type="ECO:0000303" key="44">
    <source>
    </source>
</evidence>
<evidence type="ECO:0000303" key="45">
    <source ref="5"/>
</evidence>
<evidence type="ECO:0000305" key="46"/>
<evidence type="ECO:0000305" key="47">
    <source>
    </source>
</evidence>
<evidence type="ECO:0007744" key="48">
    <source>
        <dbReference type="PDB" id="3GHM"/>
    </source>
</evidence>
<evidence type="ECO:0007744" key="49">
    <source>
        <dbReference type="PDB" id="3GHN"/>
    </source>
</evidence>
<evidence type="ECO:0007744" key="50">
    <source>
        <dbReference type="PDB" id="3VN4"/>
    </source>
</evidence>
<evidence type="ECO:0007829" key="51">
    <source>
        <dbReference type="PDB" id="3GHM"/>
    </source>
</evidence>
<evidence type="ECO:0007829" key="52">
    <source>
        <dbReference type="PDB" id="3GHN"/>
    </source>
</evidence>
<evidence type="ECO:0007829" key="53">
    <source>
        <dbReference type="PDB" id="3VN4"/>
    </source>
</evidence>
<evidence type="ECO:0007829" key="54">
    <source>
        <dbReference type="PDB" id="6QIG"/>
    </source>
</evidence>
<evidence type="ECO:0007829" key="55">
    <source>
        <dbReference type="PDB" id="7B01"/>
    </source>
</evidence>
<name>ATS13_HUMAN</name>
<protein>
    <recommendedName>
        <fullName>A disintegrin and metalloproteinase with thrombospondin motifs 13</fullName>
        <shortName>ADAM-TS 13</shortName>
        <shortName>ADAM-TS13</shortName>
        <shortName>ADAMTS-13</shortName>
        <ecNumber evidence="9">3.4.24.87</ecNumber>
    </recommendedName>
    <alternativeName>
        <fullName>von Willebrand factor-cleaving protease</fullName>
        <shortName>vWF-CP</shortName>
        <shortName>vWF-cleaving protease</shortName>
    </alternativeName>
</protein>
<keyword id="KW-0002">3D-structure</keyword>
<keyword id="KW-0025">Alternative splicing</keyword>
<keyword id="KW-0094">Blood coagulation</keyword>
<keyword id="KW-0106">Calcium</keyword>
<keyword id="KW-0165">Cleavage on pair of basic residues</keyword>
<keyword id="KW-0903">Direct protein sequencing</keyword>
<keyword id="KW-0225">Disease variant</keyword>
<keyword id="KW-1015">Disulfide bond</keyword>
<keyword id="KW-0325">Glycoprotein</keyword>
<keyword id="KW-0356">Hemostasis</keyword>
<keyword id="KW-0378">Hydrolase</keyword>
<keyword id="KW-0479">Metal-binding</keyword>
<keyword id="KW-0482">Metalloprotease</keyword>
<keyword id="KW-0645">Protease</keyword>
<keyword id="KW-1267">Proteomics identification</keyword>
<keyword id="KW-1185">Reference proteome</keyword>
<keyword id="KW-0677">Repeat</keyword>
<keyword id="KW-0964">Secreted</keyword>
<keyword id="KW-0732">Signal</keyword>
<keyword id="KW-0862">Zinc</keyword>
<keyword id="KW-0865">Zymogen</keyword>
<comment type="function">
    <text evidence="40">Cleaves the vWF multimers in plasma into smaller forms thereby controlling vWF-mediated platelet thrombus formation.</text>
</comment>
<comment type="catalytic activity">
    <reaction evidence="9">
        <text>The enzyme cleaves the von Willebrand factor at bond 842-Tyr-|-Met-843 within the A2 domain.</text>
        <dbReference type="EC" id="3.4.24.87"/>
    </reaction>
</comment>
<comment type="cofactor">
    <cofactor evidence="2">
        <name>Zn(2+)</name>
        <dbReference type="ChEBI" id="CHEBI:29105"/>
    </cofactor>
    <text evidence="2">Binds 1 zinc ion per subunit.</text>
</comment>
<comment type="cofactor">
    <cofactor evidence="36">
        <name>Ca(2+)</name>
        <dbReference type="ChEBI" id="CHEBI:29108"/>
    </cofactor>
    <text evidence="36">Binds 4 Ca(2+) ions.</text>
</comment>
<comment type="activity regulation">
    <text evidence="19 26 36">Zinc and calcium ions cooperatively modulate enzyme activity. The cleavage of the pro-domain is not required for protease activity. Dependence on calcium for proteolytic activity is mediated by the high affinity site.</text>
</comment>
<comment type="interaction">
    <interactant intactId="EBI-981764">
        <id>Q76LX8</id>
    </interactant>
    <interactant intactId="EBI-981819">
        <id>P04275</id>
        <label>VWF</label>
    </interactant>
    <organismsDiffer>false</organismsDiffer>
    <experiments>19</experiments>
</comment>
<comment type="subcellular location">
    <subcellularLocation>
        <location evidence="17">Secreted</location>
    </subcellularLocation>
    <text>Secretion enhanced by O-fucosylation of TSP type-1 repeats.</text>
</comment>
<comment type="alternative products">
    <event type="alternative splicing"/>
    <isoform>
        <id>Q76LX8-1</id>
        <name>1</name>
        <sequence type="displayed"/>
    </isoform>
    <isoform>
        <id>Q76LX8-2</id>
        <name>2</name>
        <sequence type="described" ref="VSP_020003"/>
    </isoform>
    <isoform>
        <id>Q76LX8-3</id>
        <name>3</name>
        <sequence type="described" ref="VSP_020002 VSP_020003"/>
    </isoform>
    <isoform>
        <id>Q76LX8-4</id>
        <name>4</name>
        <sequence type="described" ref="VSP_055537 VSP_055538 VSP_055539"/>
    </isoform>
</comment>
<comment type="tissue specificity">
    <text evidence="11">Plasma. Expressed primarily in liver.</text>
</comment>
<comment type="domain">
    <text>The pro-domain is not required for folding or secretion and does not perform the common function of maintening enzyme latency.</text>
</comment>
<comment type="domain">
    <text>The globular cysteineless spacer domain adopts a jelly-roll topology, and is necessary to recognize and cleave vWF. The C-terminal TSP type-1 and CUB domains may modulate this interaction.</text>
</comment>
<comment type="PTM">
    <text evidence="10 27 34 39 40">Glycosylated. O-fucosylated by POFUT2 on a serine or a threonine residue found within the consensus sequence C1-X(2)-(S/T)-C2-G of the TSP type-1 repeat domains where C1 and C2 are the first and second cysteine residue of the repeat, respectively. Fucosylated repeats can then be further glycosylated by the addition of a beta-1,3-glucose residue by the glucosyltransferase, B3GALTL. Fucosylation mediates the efficient secretion of ADAMTS13. May also be C-glycosylated on tryptophan residues within the consensus sequence W-X-X-W of the TPRs, and also N-glycosylated. These other glycosylations can also facilitate secretion.</text>
</comment>
<comment type="PTM">
    <text>The precursor is processed by a furin endopeptidase which cleaves off the pro-domain.</text>
</comment>
<comment type="polymorphism">
    <text evidence="47">Genetic variations in ADAMTS13 coding region influence plasmatic ADAMTS13 activity levels. Dependent on the sequence context, the same polymorphisms might be either positive or negative modifiers of gene expression, thereby altering the phenotype of ADAMTS13 deficiency.</text>
</comment>
<comment type="disease" evidence="12 13 14 15 16 20 21 22 23 24 25 28 29 31 32 33 35 37 38 42">
    <disease id="DI-01421">
        <name>Thrombotic thrombocytopenic purpura, hereditary</name>
        <acronym>TTP</acronym>
        <description>An autosomal recessive hematologic disease characterized by hemolytic anemia with fragmentation of erythrocytes, thrombocytopenia, diffuse and non-focal neurologic findings, decreased renal function and fever.</description>
        <dbReference type="MIM" id="274150"/>
    </disease>
    <text>The disease is caused by variants affecting the gene represented in this entry.</text>
</comment>
<comment type="sequence caution" evidence="46">
    <conflict type="erroneous initiation">
        <sequence resource="EMBL-CDS" id="AAQ88485"/>
    </conflict>
    <text>Truncated N-terminus.</text>
</comment>
<comment type="sequence caution" evidence="46">
    <conflict type="erroneous initiation">
        <sequence resource="EMBL-CDS" id="CAB66743"/>
    </conflict>
    <text>Truncated N-terminus.</text>
</comment>
<comment type="online information" name="Wikipedia">
    <link uri="https://en.wikipedia.org/wiki/ADAMTS13"/>
    <text>ADAMTS13 entry</text>
</comment>
<comment type="online information" name="Mendelian genes ADAM metallopeptidase with thrombospondin type 1 motif, 13 (ADAMTS13)">
    <link uri="https://databases.lovd.nl/shared/genes/ADAMTS13"/>
    <text>Leiden Open Variation Database (LOVD)</text>
</comment>
<organism>
    <name type="scientific">Homo sapiens</name>
    <name type="common">Human</name>
    <dbReference type="NCBI Taxonomy" id="9606"/>
    <lineage>
        <taxon>Eukaryota</taxon>
        <taxon>Metazoa</taxon>
        <taxon>Chordata</taxon>
        <taxon>Craniata</taxon>
        <taxon>Vertebrata</taxon>
        <taxon>Euteleostomi</taxon>
        <taxon>Mammalia</taxon>
        <taxon>Eutheria</taxon>
        <taxon>Euarchontoglires</taxon>
        <taxon>Primates</taxon>
        <taxon>Haplorrhini</taxon>
        <taxon>Catarrhini</taxon>
        <taxon>Hominidae</taxon>
        <taxon>Homo</taxon>
    </lineage>
</organism>
<reference key="1">
    <citation type="journal article" date="2001" name="J. Biochem.">
        <title>A novel human metalloprotease synthesized in the liver and secreted into the blood: possibly, the von Willebrand factor-cleaving protease?</title>
        <authorList>
            <person name="Soejima K."/>
            <person name="Mimura N."/>
            <person name="Hirashima M."/>
            <person name="Maeda H."/>
            <person name="Hamamoto T."/>
            <person name="Nakagaki T."/>
            <person name="Nozaki C."/>
        </authorList>
    </citation>
    <scope>NUCLEOTIDE SEQUENCE [MRNA] (ISOFORM 1)</scope>
    <scope>PROTEIN SEQUENCE OF 75-103</scope>
    <scope>TISSUE SPECIFICITY</scope>
    <source>
        <tissue>Liver</tissue>
    </source>
</reference>
<reference key="2">
    <citation type="journal article" date="2001" name="J. Biol. Chem.">
        <title>Structure of von Willebrand factor-cleaving protease (ADAMTS13), a metalloprotease involved in thrombotic thrombocytopenic purpura.</title>
        <authorList>
            <person name="Zheng X."/>
            <person name="Chung D."/>
            <person name="Takayama T.K."/>
            <person name="Majerus E.M."/>
            <person name="Sadler J.E."/>
            <person name="Fujikawa K."/>
        </authorList>
    </citation>
    <scope>NUCLEOTIDE SEQUENCE [MRNA] (ISOFORM 1)</scope>
    <scope>GLYCOSYLATION</scope>
    <scope>VARIANT VAL-900</scope>
    <source>
        <tissue>Liver</tissue>
    </source>
</reference>
<reference key="3">
    <citation type="journal article" date="2001" name="Nature">
        <title>Mutations in a member of the ADAMTS gene family cause thrombotic thrombocytopenic purpura.</title>
        <authorList>
            <person name="Levy G.G."/>
            <person name="Nichols W.C."/>
            <person name="Lian E.C."/>
            <person name="Foroud T."/>
            <person name="McClintick J.N."/>
            <person name="McGee B.M."/>
            <person name="Yang A.Y."/>
            <person name="Siemieniak D.R."/>
            <person name="Stark K.R."/>
            <person name="Gruppo R."/>
            <person name="Sarode R."/>
            <person name="Shurin S.B."/>
            <person name="Chandrasekaran V."/>
            <person name="Stabler S.P."/>
            <person name="Sabio H."/>
            <person name="Bouhassira E.E."/>
            <person name="Upshaw J.D. Jr."/>
            <person name="Ginsburg D."/>
            <person name="Tsai H.-M."/>
        </authorList>
    </citation>
    <scope>NUCLEOTIDE SEQUENCE [MRNA] (ISOFORM 1)</scope>
    <scope>INVOLVEMENT IN THROMBOTIC THROMBOCYTOPENIC PURPURA</scope>
    <scope>VARIANTS TTP ASP-96; CYS-102; ILE-196; HIS-398; GLY-528; CYS-692; GLY-951; GLY-1024 AND TYR-1213</scope>
    <scope>VARIANTS TRP-7; GLU-448; ALA-618; HIS-625; VAL-732; VAL-900 AND THR-1033</scope>
    <source>
        <tissue>Liver</tissue>
    </source>
</reference>
<reference key="4">
    <citation type="journal article" date="2002" name="Gene">
        <title>Cloning, expression analysis, and structural characterization of seven novel human ADAMTSs, a family of metalloproteinases with disintegrin and thrombospondin-1 domains.</title>
        <authorList>
            <person name="Cal S."/>
            <person name="Obaya A.J."/>
            <person name="Llamazares M."/>
            <person name="Garabaya C."/>
            <person name="Quesada V."/>
            <person name="Lopez-Otin C."/>
        </authorList>
    </citation>
    <scope>NUCLEOTIDE SEQUENCE [MRNA] (ISOFORMS 2 AND 3)</scope>
    <source>
        <tissue>Liver</tissue>
    </source>
</reference>
<reference key="5">
    <citation type="submission" date="1998-09" db="EMBL/GenBank/DDBJ databases">
        <title>Cloning of a sugar transporter gene, a G-beta subunit like gene and three novel genes in human chromosome 9q34.</title>
        <authorList>
            <person name="Young J.M."/>
            <person name="Woodward K.J."/>
            <person name="Aziz S."/>
            <person name="Burley M."/>
            <person name="Kwiatkowski D.J."/>
            <person name="Povey S."/>
        </authorList>
    </citation>
    <scope>NUCLEOTIDE SEQUENCE [MRNA] (ISOFORM 4)</scope>
    <source>
        <tissue>Brain</tissue>
    </source>
</reference>
<reference key="6">
    <citation type="submission" date="2006-03" db="EMBL/GenBank/DDBJ databases">
        <authorList>
            <consortium name="SeattleSNPs variation discovery resource"/>
        </authorList>
    </citation>
    <scope>NUCLEOTIDE SEQUENCE [GENOMIC DNA]</scope>
    <scope>VARIANTS TRP-7; GLU-448; HIS-456; LEU-457; ALA-618; HIS-625; LYS-740; VAL-900; ARG-982; THR-1033 AND ILE-1226</scope>
</reference>
<reference key="7">
    <citation type="journal article" date="2004" name="Nature">
        <title>DNA sequence and analysis of human chromosome 9.</title>
        <authorList>
            <person name="Humphray S.J."/>
            <person name="Oliver K."/>
            <person name="Hunt A.R."/>
            <person name="Plumb R.W."/>
            <person name="Loveland J.E."/>
            <person name="Howe K.L."/>
            <person name="Andrews T.D."/>
            <person name="Searle S."/>
            <person name="Hunt S.E."/>
            <person name="Scott C.E."/>
            <person name="Jones M.C."/>
            <person name="Ainscough R."/>
            <person name="Almeida J.P."/>
            <person name="Ambrose K.D."/>
            <person name="Ashwell R.I.S."/>
            <person name="Babbage A.K."/>
            <person name="Babbage S."/>
            <person name="Bagguley C.L."/>
            <person name="Bailey J."/>
            <person name="Banerjee R."/>
            <person name="Barker D.J."/>
            <person name="Barlow K.F."/>
            <person name="Bates K."/>
            <person name="Beasley H."/>
            <person name="Beasley O."/>
            <person name="Bird C.P."/>
            <person name="Bray-Allen S."/>
            <person name="Brown A.J."/>
            <person name="Brown J.Y."/>
            <person name="Burford D."/>
            <person name="Burrill W."/>
            <person name="Burton J."/>
            <person name="Carder C."/>
            <person name="Carter N.P."/>
            <person name="Chapman J.C."/>
            <person name="Chen Y."/>
            <person name="Clarke G."/>
            <person name="Clark S.Y."/>
            <person name="Clee C.M."/>
            <person name="Clegg S."/>
            <person name="Collier R.E."/>
            <person name="Corby N."/>
            <person name="Crosier M."/>
            <person name="Cummings A.T."/>
            <person name="Davies J."/>
            <person name="Dhami P."/>
            <person name="Dunn M."/>
            <person name="Dutta I."/>
            <person name="Dyer L.W."/>
            <person name="Earthrowl M.E."/>
            <person name="Faulkner L."/>
            <person name="Fleming C.J."/>
            <person name="Frankish A."/>
            <person name="Frankland J.A."/>
            <person name="French L."/>
            <person name="Fricker D.G."/>
            <person name="Garner P."/>
            <person name="Garnett J."/>
            <person name="Ghori J."/>
            <person name="Gilbert J.G.R."/>
            <person name="Glison C."/>
            <person name="Grafham D.V."/>
            <person name="Gribble S."/>
            <person name="Griffiths C."/>
            <person name="Griffiths-Jones S."/>
            <person name="Grocock R."/>
            <person name="Guy J."/>
            <person name="Hall R.E."/>
            <person name="Hammond S."/>
            <person name="Harley J.L."/>
            <person name="Harrison E.S.I."/>
            <person name="Hart E.A."/>
            <person name="Heath P.D."/>
            <person name="Henderson C.D."/>
            <person name="Hopkins B.L."/>
            <person name="Howard P.J."/>
            <person name="Howden P.J."/>
            <person name="Huckle E."/>
            <person name="Johnson C."/>
            <person name="Johnson D."/>
            <person name="Joy A.A."/>
            <person name="Kay M."/>
            <person name="Keenan S."/>
            <person name="Kershaw J.K."/>
            <person name="Kimberley A.M."/>
            <person name="King A."/>
            <person name="Knights A."/>
            <person name="Laird G.K."/>
            <person name="Langford C."/>
            <person name="Lawlor S."/>
            <person name="Leongamornlert D.A."/>
            <person name="Leversha M."/>
            <person name="Lloyd C."/>
            <person name="Lloyd D.M."/>
            <person name="Lovell J."/>
            <person name="Martin S."/>
            <person name="Mashreghi-Mohammadi M."/>
            <person name="Matthews L."/>
            <person name="McLaren S."/>
            <person name="McLay K.E."/>
            <person name="McMurray A."/>
            <person name="Milne S."/>
            <person name="Nickerson T."/>
            <person name="Nisbett J."/>
            <person name="Nordsiek G."/>
            <person name="Pearce A.V."/>
            <person name="Peck A.I."/>
            <person name="Porter K.M."/>
            <person name="Pandian R."/>
            <person name="Pelan S."/>
            <person name="Phillimore B."/>
            <person name="Povey S."/>
            <person name="Ramsey Y."/>
            <person name="Rand V."/>
            <person name="Scharfe M."/>
            <person name="Sehra H.K."/>
            <person name="Shownkeen R."/>
            <person name="Sims S.K."/>
            <person name="Skuce C.D."/>
            <person name="Smith M."/>
            <person name="Steward C.A."/>
            <person name="Swarbreck D."/>
            <person name="Sycamore N."/>
            <person name="Tester J."/>
            <person name="Thorpe A."/>
            <person name="Tracey A."/>
            <person name="Tromans A."/>
            <person name="Thomas D.W."/>
            <person name="Wall M."/>
            <person name="Wallis J.M."/>
            <person name="West A.P."/>
            <person name="Whitehead S.L."/>
            <person name="Willey D.L."/>
            <person name="Williams S.A."/>
            <person name="Wilming L."/>
            <person name="Wray P.W."/>
            <person name="Young L."/>
            <person name="Ashurst J.L."/>
            <person name="Coulson A."/>
            <person name="Blocker H."/>
            <person name="Durbin R.M."/>
            <person name="Sulston J.E."/>
            <person name="Hubbard T."/>
            <person name="Jackson M.J."/>
            <person name="Bentley D.R."/>
            <person name="Beck S."/>
            <person name="Rogers J."/>
            <person name="Dunham I."/>
        </authorList>
    </citation>
    <scope>NUCLEOTIDE SEQUENCE [LARGE SCALE GENOMIC DNA]</scope>
</reference>
<reference key="8">
    <citation type="submission" date="2005-07" db="EMBL/GenBank/DDBJ databases">
        <authorList>
            <person name="Mural R.J."/>
            <person name="Istrail S."/>
            <person name="Sutton G."/>
            <person name="Florea L."/>
            <person name="Halpern A.L."/>
            <person name="Mobarry C.M."/>
            <person name="Lippert R."/>
            <person name="Walenz B."/>
            <person name="Shatkay H."/>
            <person name="Dew I."/>
            <person name="Miller J.R."/>
            <person name="Flanigan M.J."/>
            <person name="Edwards N.J."/>
            <person name="Bolanos R."/>
            <person name="Fasulo D."/>
            <person name="Halldorsson B.V."/>
            <person name="Hannenhalli S."/>
            <person name="Turner R."/>
            <person name="Yooseph S."/>
            <person name="Lu F."/>
            <person name="Nusskern D.R."/>
            <person name="Shue B.C."/>
            <person name="Zheng X.H."/>
            <person name="Zhong F."/>
            <person name="Delcher A.L."/>
            <person name="Huson D.H."/>
            <person name="Kravitz S.A."/>
            <person name="Mouchard L."/>
            <person name="Reinert K."/>
            <person name="Remington K.A."/>
            <person name="Clark A.G."/>
            <person name="Waterman M.S."/>
            <person name="Eichler E.E."/>
            <person name="Adams M.D."/>
            <person name="Hunkapiller M.W."/>
            <person name="Myers E.W."/>
            <person name="Venter J.C."/>
        </authorList>
    </citation>
    <scope>NUCLEOTIDE SEQUENCE [LARGE SCALE GENOMIC DNA]</scope>
</reference>
<reference key="9">
    <citation type="journal article" date="2003" name="Genome Res.">
        <title>The secreted protein discovery initiative (SPDI), a large-scale effort to identify novel human secreted and transmembrane proteins: a bioinformatics assessment.</title>
        <authorList>
            <person name="Clark H.F."/>
            <person name="Gurney A.L."/>
            <person name="Abaya E."/>
            <person name="Baker K."/>
            <person name="Baldwin D.T."/>
            <person name="Brush J."/>
            <person name="Chen J."/>
            <person name="Chow B."/>
            <person name="Chui C."/>
            <person name="Crowley C."/>
            <person name="Currell B."/>
            <person name="Deuel B."/>
            <person name="Dowd P."/>
            <person name="Eaton D."/>
            <person name="Foster J.S."/>
            <person name="Grimaldi C."/>
            <person name="Gu Q."/>
            <person name="Hass P.E."/>
            <person name="Heldens S."/>
            <person name="Huang A."/>
            <person name="Kim H.S."/>
            <person name="Klimowski L."/>
            <person name="Jin Y."/>
            <person name="Johnson S."/>
            <person name="Lee J."/>
            <person name="Lewis L."/>
            <person name="Liao D."/>
            <person name="Mark M.R."/>
            <person name="Robbie E."/>
            <person name="Sanchez C."/>
            <person name="Schoenfeld J."/>
            <person name="Seshagiri S."/>
            <person name="Simmons L."/>
            <person name="Singh J."/>
            <person name="Smith V."/>
            <person name="Stinson J."/>
            <person name="Vagts A."/>
            <person name="Vandlen R.L."/>
            <person name="Watanabe C."/>
            <person name="Wieand D."/>
            <person name="Woods K."/>
            <person name="Xie M.-H."/>
            <person name="Yansura D.G."/>
            <person name="Yi S."/>
            <person name="Yu G."/>
            <person name="Yuan J."/>
            <person name="Zhang M."/>
            <person name="Zhang Z."/>
            <person name="Goddard A.D."/>
            <person name="Wood W.I."/>
            <person name="Godowski P.J."/>
            <person name="Gray A.M."/>
        </authorList>
    </citation>
    <scope>NUCLEOTIDE SEQUENCE [LARGE SCALE MRNA] OF 275-1427</scope>
    <scope>VARIANT GLU-448</scope>
</reference>
<reference key="10">
    <citation type="journal article" date="2001" name="Genome Res.">
        <title>Towards a catalog of human genes and proteins: sequencing and analysis of 500 novel complete protein coding human cDNAs.</title>
        <authorList>
            <person name="Wiemann S."/>
            <person name="Weil B."/>
            <person name="Wellenreuther R."/>
            <person name="Gassenhuber J."/>
            <person name="Glassl S."/>
            <person name="Ansorge W."/>
            <person name="Boecher M."/>
            <person name="Bloecker H."/>
            <person name="Bauersachs S."/>
            <person name="Blum H."/>
            <person name="Lauber J."/>
            <person name="Duesterhoeft A."/>
            <person name="Beyer A."/>
            <person name="Koehrer K."/>
            <person name="Strack N."/>
            <person name="Mewes H.-W."/>
            <person name="Ottenwaelder B."/>
            <person name="Obermaier B."/>
            <person name="Tampe J."/>
            <person name="Heubner D."/>
            <person name="Wambutt R."/>
            <person name="Korn B."/>
            <person name="Klein M."/>
            <person name="Poustka A."/>
        </authorList>
    </citation>
    <scope>NUCLEOTIDE SEQUENCE [LARGE SCALE MRNA] OF 1191-1427</scope>
    <source>
        <tissue>Testis</tissue>
    </source>
</reference>
<reference key="11">
    <citation type="journal article" date="2001" name="Blood">
        <title>Partial amino acid sequence of purified von Willebrand factor-cleaving protease.</title>
        <authorList>
            <person name="Gerritsen H.E."/>
            <person name="Robles R."/>
            <person name="Laemmle B."/>
            <person name="Furlan M."/>
        </authorList>
    </citation>
    <scope>PROTEIN SEQUENCE OF 75-89</scope>
</reference>
<reference key="12">
    <citation type="journal article" date="2001" name="Blood">
        <title>Purification of human von Willebrand factor-cleaving protease and its identification as a new member of the metalloproteinase family.</title>
        <authorList>
            <person name="Fujikawa K."/>
            <person name="Suzuki H."/>
            <person name="McMullen B."/>
            <person name="Chung D."/>
        </authorList>
    </citation>
    <scope>PROTEIN SEQUENCE OF 75-94</scope>
    <scope>CATALYTIC ACTIVITY</scope>
</reference>
<reference key="13">
    <citation type="journal article" date="2003" name="J. Biol. Chem.">
        <title>Cleavage of von Willebrand factor requires the spacer domain of the metalloprotease ADAMTS13.</title>
        <authorList>
            <person name="Zheng X."/>
            <person name="Nishio K."/>
            <person name="Majerus E.M."/>
            <person name="Sadler J.E."/>
        </authorList>
    </citation>
    <scope>CHARACTERIZATION</scope>
    <scope>SUBCELLULAR LOCATION</scope>
</reference>
<reference key="14">
    <citation type="journal article" date="2003" name="J. Biol. Chem.">
        <title>Cleavage of the ADAMTS13 propeptide is not required for protease activity.</title>
        <authorList>
            <person name="Majerus E.M."/>
            <person name="Zheng X."/>
            <person name="Tuley E.A."/>
            <person name="Sadler J.E."/>
        </authorList>
    </citation>
    <scope>ACTIVITY REGULATION</scope>
    <scope>MUTAGENESIS OF ARG-71 AND ARG-73</scope>
</reference>
<reference key="15">
    <citation type="journal article" date="2005" name="J. Proteome Res.">
        <title>Human plasma N-glycoproteome analysis by immunoaffinity subtraction, hydrazide chemistry, and mass spectrometry.</title>
        <authorList>
            <person name="Liu T."/>
            <person name="Qian W.-J."/>
            <person name="Gritsenko M.A."/>
            <person name="Camp D.G. II"/>
            <person name="Monroe M.E."/>
            <person name="Moore R.J."/>
            <person name="Smith R.D."/>
        </authorList>
    </citation>
    <scope>GLYCOSYLATION [LARGE SCALE ANALYSIS] AT ASN-614; ASN-667 AND ASN-1354</scope>
    <source>
        <tissue>Plasma</tissue>
    </source>
</reference>
<reference key="16">
    <citation type="journal article" date="2006" name="J. Biol. Chem.">
        <title>Zinc and calcium ions cooperatively modulate ADAMTS13 activity.</title>
        <authorList>
            <person name="Anderson P.J."/>
            <person name="Kokame K."/>
            <person name="Sadler J.E."/>
        </authorList>
    </citation>
    <scope>ACTIVITY REGULATION</scope>
</reference>
<reference key="17">
    <citation type="journal article" date="2007" name="J. Biol. Chem.">
        <title>O-fucosylation is required for ADAMTS13 secretion.</title>
        <authorList>
            <person name="Ricketts L.M."/>
            <person name="Dlugosz M."/>
            <person name="Luther K.B."/>
            <person name="Haltiwanger R.S."/>
            <person name="Majerus E.M."/>
        </authorList>
    </citation>
    <scope>GLYCOSYLATION AT SER-698; SER-757; SER-907; SER-965; SER-1027 AND SER-1087</scope>
    <scope>IDENTIFICATION BY MASS SPECTROMETRY</scope>
    <scope>MUTAGENESIS OF SER-399; SER-698; SER-757; SER-907; SER-965; SER-1027 AND SER-1087</scope>
</reference>
<reference key="18">
    <citation type="journal article" date="2009" name="Blood">
        <title>A functional calcium-binding site in the metalloprotease domain of ADAMTS13.</title>
        <authorList>
            <person name="Gardner M.D."/>
            <person name="Chion C.K."/>
            <person name="de Groot R."/>
            <person name="Shah A."/>
            <person name="Crawley J.T."/>
            <person name="Lane D.A."/>
        </authorList>
    </citation>
    <scope>ACTIVITY REGULATION</scope>
    <scope>CALCIUM-BINDING SITES</scope>
    <scope>MUTAGENESIS OF GLU-83; ASP-173; GLU-184; ASP-187 AND GLU-212</scope>
</reference>
<reference key="19">
    <citation type="journal article" date="2009" name="Mol. Cell. Proteomics">
        <title>A strategy for precise and large scale identification of core fucosylated glycoproteins.</title>
        <authorList>
            <person name="Jia W."/>
            <person name="Lu Z."/>
            <person name="Fu Y."/>
            <person name="Wang H.P."/>
            <person name="Wang L.H."/>
            <person name="Chi H."/>
            <person name="Yuan Z.F."/>
            <person name="Zheng Z.B."/>
            <person name="Song L.N."/>
            <person name="Han H.H."/>
            <person name="Liang Y.M."/>
            <person name="Wang J.L."/>
            <person name="Cai Y."/>
            <person name="Zhang Y.K."/>
            <person name="Deng Y.L."/>
            <person name="Ying W.T."/>
            <person name="He S.M."/>
            <person name="Qian X.H."/>
        </authorList>
    </citation>
    <scope>GLYCOSYLATION AT ASN-667 AND ASN-707</scope>
</reference>
<reference key="20">
    <citation type="journal article" date="2010" name="Hum. Mutat.">
        <title>ADAMTS13 mutations and polymorphisms in congenital thrombotic thrombocytopenic purpura.</title>
        <authorList>
            <person name="Lotta L.A."/>
            <person name="Garagiola I."/>
            <person name="Palla R."/>
            <person name="Cairo A."/>
            <person name="Peyvandi F."/>
        </authorList>
    </citation>
    <scope>REVIEW ON VARIANTS</scope>
</reference>
<reference key="21">
    <citation type="journal article" date="2009" name="Proc. Natl. Acad. Sci. U.S.A.">
        <title>Crystal structures of the noncatalytic domains of ADAMTS13 reveal multiple discontinuous exosites for von Willebrand factor.</title>
        <authorList>
            <person name="Akiyama M."/>
            <person name="Takeda S."/>
            <person name="Kokame K."/>
            <person name="Takagi J."/>
            <person name="Miyata T."/>
        </authorList>
    </citation>
    <scope>X-RAY CRYSTALLOGRAPHY (2.6 ANGSTROMS) OF 287-685</scope>
    <scope>FUNCTION</scope>
    <scope>GLYCOSYLATION AT TRP-387; SER-399; ASN-552 AND ASN-614</scope>
    <scope>SPACER DOMAIN</scope>
    <scope>DISULFIDE BONDS</scope>
</reference>
<reference key="22">
    <citation type="journal article" date="2002" name="Proc. Natl. Acad. Sci. U.S.A.">
        <title>Mutations and common polymorphisms in ADAMTS13 gene responsible for von Willebrand factor-cleaving protease activity.</title>
        <authorList>
            <person name="Kokame K."/>
            <person name="Matsumoto M."/>
            <person name="Soejima K."/>
            <person name="Yagi H."/>
            <person name="Ishizashi H."/>
            <person name="Funato M."/>
            <person name="Tamai H."/>
            <person name="Konno M."/>
            <person name="Kamide K."/>
            <person name="Kawano Y."/>
            <person name="Miyata T."/>
            <person name="Fujimura Y."/>
        </authorList>
    </citation>
    <scope>VARIANTS TTP PRO-268 AND TYR-508</scope>
    <scope>VARIANTS GLU-448 AND SER-475</scope>
    <scope>CHARACTERIZATION OF VARIANTS TTP PRO-268 AND TYR-508</scope>
    <scope>CHARACTERIZATION OF VARIANTS GLU-448 AND SER-475</scope>
</reference>
<reference key="23">
    <citation type="journal article" date="2003" name="Blood">
        <title>von Willebrand factor cleaving protease and ADAMTS13 mutations in childhood TTP.</title>
        <authorList>
            <person name="Schneppenheim R."/>
            <person name="Budde U."/>
            <person name="Oyen F."/>
            <person name="Angerhaus D."/>
            <person name="Aumann V."/>
            <person name="Drewke E."/>
            <person name="Hassenpflug W."/>
            <person name="Haberle J."/>
            <person name="Kentouche K."/>
            <person name="Kohne E."/>
            <person name="Kurnik K."/>
            <person name="Mueller-Wiefel D."/>
            <person name="Obser T."/>
            <person name="Santer R."/>
            <person name="Sykora K.W."/>
        </authorList>
    </citation>
    <scope>VARIANTS TTP GLN-232; CYS-263 AND LEU-353</scope>
</reference>
<reference key="24">
    <citation type="journal article" date="2003" name="Br. J. Haematol.">
        <title>ADAMTS13 gene defects in two brothers with constitutional thrombotic thrombocytopenic purpura and normalization of von Willebrand factor-cleaving protease activity by recombinant human ADAMTS13.</title>
        <authorList>
            <person name="Antoine G."/>
            <person name="Zimmermann K."/>
            <person name="Plaimauer B."/>
            <person name="Grillowitzer M."/>
            <person name="Studt J.D."/>
            <person name="Lammle B."/>
            <person name="Scheiflinger F."/>
        </authorList>
    </citation>
    <scope>VARIANT TTP TRP-1336</scope>
    <scope>VARIANT VAL-732</scope>
</reference>
<reference key="25">
    <citation type="journal article" date="2003" name="Kidney Int.">
        <title>Mutation analysis and clinical implications of von Willebrand factor-cleaving protease deficiency.</title>
        <authorList>
            <person name="Assink K."/>
            <person name="Schiphorst R."/>
            <person name="Allford S."/>
            <person name="Karpman D."/>
            <person name="Etzioni A."/>
            <person name="Brichard B."/>
            <person name="van de Kar N."/>
            <person name="Monnens L."/>
            <person name="van den Heuvel L."/>
        </authorList>
    </citation>
    <scope>VARIANTS TTP HIS-235; TYR-311 AND LEU-353</scope>
    <scope>VARIANT LEU-457</scope>
</reference>
<reference key="26">
    <citation type="journal article" date="2004" name="Blood">
        <title>Congenital thrombotic thrombocytopenic purpura in association with a mutation in the second CUB domain of ADAMTS13.</title>
        <authorList>
            <person name="Pimanda J.E."/>
            <person name="Maekawa A."/>
            <person name="Wind T."/>
            <person name="Paxton J."/>
            <person name="Chesterman C.N."/>
            <person name="Hogg P.J."/>
        </authorList>
    </citation>
    <scope>VARIANT TTP ILE-196</scope>
    <scope>VARIANT GLU-448</scope>
</reference>
<reference key="27">
    <citation type="journal article" date="2004" name="Blood">
        <title>Molecular characterization of ADAMTS13 gene mutations in Japanese patients with Upshaw-Schulman syndrome.</title>
        <authorList>
            <person name="Matsumoto M."/>
            <person name="Kokame K."/>
            <person name="Soejima K."/>
            <person name="Miura M."/>
            <person name="Hayashi S."/>
            <person name="Fujii Y."/>
            <person name="Iwai A."/>
            <person name="Ito E."/>
            <person name="Tsuji Y."/>
            <person name="Takeda-Shitaka M."/>
            <person name="Iwadate M."/>
            <person name="Umeyama H."/>
            <person name="Yagi H."/>
            <person name="Ishizashi H."/>
            <person name="Banno F."/>
            <person name="Nakagaki T."/>
            <person name="Miyata T."/>
            <person name="Fujimura Y."/>
        </authorList>
    </citation>
    <scope>VARIANTS TTP TRP-193; PHE-673; TYR-908 AND CYS-1123</scope>
    <scope>VARIANT GLU-448</scope>
    <scope>CHARACTERIZATION OF VARIANTS TTP TRP-193; PHE-673; TYR-908 AND CYS-1123</scope>
</reference>
<reference key="28">
    <citation type="journal article" date="2004" name="Blood">
        <title>Identification of novel mutations in ADAMTS13 in an adult patient with congenital thrombotic thrombocytopenic purpura.</title>
        <authorList>
            <person name="Uchida T."/>
            <person name="Wada H."/>
            <person name="Mizutani M."/>
            <person name="Iwashita M."/>
            <person name="Ishihara H."/>
            <person name="Shibano T."/>
            <person name="Suzuki M."/>
            <person name="Matsubara Y."/>
            <person name="Soejima K."/>
            <person name="Matsumoto M."/>
            <person name="Fujimura Y."/>
            <person name="Ikeda Y."/>
            <person name="Murata M."/>
        </authorList>
    </citation>
    <scope>VARIANT TTP VAL-250</scope>
    <scope>CHARACTERIZATION OF VARIANT TTP VAL-250</scope>
</reference>
<reference key="29">
    <citation type="journal article" date="2004" name="J. Thromb. Haemost.">
        <title>Ten candidate ADAMTS13 mutations in six French families with congenital thrombotic thrombocytopenic purpura (Upshaw-Schulman syndrome).</title>
        <authorList>
            <person name="Veyradier A."/>
            <person name="Lavergne J.M."/>
            <person name="Ribba A.S."/>
            <person name="Obert B."/>
            <person name="Loirat C."/>
            <person name="Meyer D."/>
            <person name="Girma J.P."/>
        </authorList>
    </citation>
    <scope>VARIANTS TTP MET-79; PRO-203; PRO-268; GLN-507; VAL-596; ARG-758 AND SER-908</scope>
</reference>
<reference key="30">
    <citation type="journal article" date="2004" name="Kidney Int.">
        <title>Two novel ADAMTS13 gene mutations in thrombotic thrombocytopenic purpura/hemolytic-uremic syndrome (TTP/HUS).</title>
        <authorList>
            <person name="Licht C."/>
            <person name="Stapenhorst L."/>
            <person name="Simon T."/>
            <person name="Budde U."/>
            <person name="Schneppenheim R."/>
            <person name="Hoppe B."/>
        </authorList>
    </citation>
    <scope>VARIANT TTP CYS-390</scope>
</reference>
<reference key="31">
    <citation type="journal article" date="2005" name="Zhonghua Xue Ye Xue Za Zhi">
        <title>Identification of two novel mutations in ADAMTS13 gene in a patient with hereditary thrombotic thrombocytopenic purpura.</title>
        <authorList>
            <person name="Liu F."/>
            <person name="Jin J."/>
            <person name="Dong N.Z."/>
            <person name="Wang Y.G."/>
            <person name="Ruan C.G."/>
        </authorList>
    </citation>
    <scope>VARIANTS LEU-903 AND TRP-1095</scope>
</reference>
<reference key="32">
    <citation type="journal article" date="2006" name="Blood">
        <title>Modulation of ADAMTS13 secretion and specific activity by a combination of common amino acid polymorphisms and a missense mutation.</title>
        <authorList>
            <person name="Plaimauer B."/>
            <person name="Fuhrmann J."/>
            <person name="Mohr G."/>
            <person name="Wernhart W."/>
            <person name="Bruno K."/>
            <person name="Ferrari S."/>
            <person name="Konetschny C."/>
            <person name="Antoine G."/>
            <person name="Rieger M."/>
            <person name="Scheiflinger F."/>
        </authorList>
    </citation>
    <scope>CHARACTERIZATION OF VARIANTS TRP-7; GLU-448; ALA-618 AND VAL-732</scope>
    <scope>CHARACTERIZATION OF VARIANT TTP TRP-1336</scope>
    <scope>DISCUSSION OF MUTUAL MODULATORY EFFECTS OF POLYMORPHISMS</scope>
</reference>
<reference key="33">
    <citation type="journal article" date="2006" name="Hum. Mutat.">
        <title>Mechanisms of the interaction between two ADAMTS13 gene mutations leading to severe deficiency of enzymatic activity.</title>
        <authorList>
            <person name="Peyvandi F."/>
            <person name="Lavoretano S."/>
            <person name="Palla R."/>
            <person name="Valsecchi C."/>
            <person name="Merati G."/>
            <person name="De Cristofaro R."/>
            <person name="Rossi E."/>
            <person name="Mannuccio Mannucci P."/>
        </authorList>
    </citation>
    <scope>VARIANTS TTP MET-88 AND VAL-1239</scope>
    <scope>CHARACTERIZATION OF VARIANTS TTP MET-88 AND VAL-1239</scope>
</reference>
<reference key="34">
    <citation type="journal article" date="2006" name="J. Thromb. Haemost.">
        <title>Novel ADAMTS-13 mutations in an adult with delayed onset thrombotic thrombocytopenic purpura.</title>
        <authorList>
            <person name="Tao Z."/>
            <person name="Anthony K."/>
            <person name="Peng Y."/>
            <person name="Choi H."/>
            <person name="Nolasco L."/>
            <person name="Rice L."/>
            <person name="Moake J.L."/>
            <person name="Dong J.F."/>
        </authorList>
    </citation>
    <scope>VARIANT TTP TRP-1060</scope>
    <scope>CHARACTERIZATION OF VARIANTS TTP TRP-1060</scope>
</reference>
<reference key="35">
    <citation type="journal article" date="2006" name="Nephrol. Dial. Transplant.">
        <title>Novel compound heterozygote mutations (H234Q/R1206X) of the ADAMTS13 gene in an adult patient with Upshaw-Schulman syndrome showing predominant episodes of repeated acute renal failure.</title>
        <authorList>
            <person name="Shibagaki Y."/>
            <person name="Matsumoto M."/>
            <person name="Kokame K."/>
            <person name="Ohba S."/>
            <person name="Miyata T."/>
            <person name="Fujimura Y."/>
            <person name="Fujita T."/>
        </authorList>
    </citation>
    <scope>VARIANT TTP GLN-234</scope>
    <scope>VARIANT LEU-903</scope>
</reference>
<reference key="36">
    <citation type="journal article" date="2006" name="Thromb. Haemost.">
        <title>A common origin of the 4143insA ADAMTS13 mutation.</title>
        <authorList>
            <person name="Schneppenheim R."/>
            <person name="Kremer Hovinga J.A."/>
            <person name="Becker T."/>
            <person name="Budde U."/>
            <person name="Karpman D."/>
            <person name="Brockhaus W."/>
            <person name="Hrachovinova I."/>
            <person name="Korczowski B."/>
            <person name="Oyen F."/>
            <person name="Rittich S."/>
            <person name="von Rosen J."/>
            <person name="Tjonnfjord G.E."/>
            <person name="Pimanda J.E."/>
            <person name="Wienker T.F."/>
            <person name="Lammle B."/>
        </authorList>
    </citation>
    <scope>VARIANTS TTP ILE-196; CYS-263; SER-347; LEU-353; GLN-507; LEU-671 AND TRP-1060</scope>
</reference>
<reference key="37">
    <citation type="journal article" date="2006" name="Thromb. Haemost.">
        <title>In-vitro and in-vivo consequences of mutations in the von Willebrand factor cleaving protease ADAMTS13 in thrombotic thrombocytopenic purpura.</title>
        <authorList>
            <person name="Donadelli R."/>
            <person name="Banterla F."/>
            <person name="Galbusera M."/>
            <person name="Capoferri C."/>
            <person name="Bucchioni S."/>
            <person name="Gastoldi S."/>
            <person name="Nosari S."/>
            <person name="Monteferrante G."/>
            <person name="Ruggeri Z.M."/>
            <person name="Bresin E."/>
            <person name="Scheiflinger F."/>
            <person name="Rossi E."/>
            <person name="Martinez C."/>
            <person name="Coppo R."/>
            <person name="Remuzzi G."/>
            <person name="Noris M."/>
        </authorList>
    </citation>
    <scope>VARIANTS TTP TRP-1060; CYS-1123 AND TRP-1219</scope>
    <scope>CHARACTERIZATION OF VARIANTS TTP TRP-1060; CYS-1123 AND TRP-1219</scope>
    <scope>VARIANT GLU-448</scope>
</reference>
<reference key="38">
    <citation type="journal article" date="2008" name="Ann. Hematol.">
        <title>A first case of congenital TTP on the African continent due to a new homozygous mutation in the catalytic domain of ADAMTS13.</title>
        <authorList>
            <person name="Meyer S.C."/>
            <person name="Jeddi R."/>
            <person name="Meddeb B."/>
            <person name="Gouider E."/>
            <person name="Lammle B."/>
            <person name="Kremer Hovinga J.A."/>
        </authorList>
    </citation>
    <scope>VARIANT TTP PHE-119</scope>
</reference>
<reference key="39">
    <citation type="journal article" date="2009" name="Br. J. Haematol.">
        <title>Pregnancy-induced thrombocytopenia and TTP, and the risk of fetal death, in Upshaw-Schulman syndrome: a series of 15 pregnancies in 9 genotyped patients.</title>
        <authorList>
            <person name="Fujimura Y."/>
            <person name="Matsumoto M."/>
            <person name="Kokame K."/>
            <person name="Isonishi A."/>
            <person name="Soejima K."/>
            <person name="Akiyama N."/>
            <person name="Tomiyama J."/>
            <person name="Natori K."/>
            <person name="Kuranishi Y."/>
            <person name="Imamura Y."/>
            <person name="Inoue N."/>
            <person name="Higasa S."/>
            <person name="Seike M."/>
            <person name="Kozuka T."/>
            <person name="Hara M."/>
            <person name="Wada H."/>
            <person name="Murata M."/>
            <person name="Ikeda Y."/>
            <person name="Miyata T."/>
            <person name="George J.N."/>
        </authorList>
    </citation>
    <scope>VARIANTS TTP THR-178; TRP-193; CYS-304; CYS-349; ASP-525 AND PRO-606</scope>
    <scope>VARIANTS ARG-339; GLU-448 AND ALA-618</scope>
</reference>
<reference key="40">
    <citation type="journal article" date="2009" name="Haematologica">
        <title>The first deletion mutation in the TSP1-6 repeat domain of ADAMTS13 in a family with inherited thrombotic thrombocytopenic purpura.</title>
        <authorList>
            <person name="Palla R."/>
            <person name="Lavoretano S."/>
            <person name="Lombardi R."/>
            <person name="Garagiola I."/>
            <person name="Karimi M."/>
            <person name="Afrasiabi A."/>
            <person name="Ramzi M."/>
            <person name="De Cristofaro R."/>
            <person name="Peyvandi F."/>
        </authorList>
    </citation>
    <scope>VARIANT TTP 977-CYS--ARG-979 DELINS TRP</scope>
</reference>
<reference key="41">
    <citation type="journal article" date="2011" name="Ann. Clin. Lab. Sci.">
        <title>A novel homozygous missense ADAMTS13 mutation Y658C in a patient with recurrent thrombotic thrombocytopenic purpura.</title>
        <authorList>
            <person name="Lee S.H."/>
            <person name="Park J.H."/>
            <person name="Park S.K."/>
            <person name="Lee E.H."/>
            <person name="Choi J.I."/>
            <person name="Visentin G.P."/>
            <person name="Park T.S."/>
            <person name="Oh S.H."/>
            <person name="Kim S.R."/>
        </authorList>
    </citation>
    <scope>VARIANT TTP CYS-658</scope>
</reference>
<reference key="42">
    <citation type="journal article" date="2011" name="Yonsei Med. J.">
        <title>ADAMTS13 gene mutations in children with hemolytic uremic syndrome.</title>
        <authorList>
            <person name="Choi H.S."/>
            <person name="Cheong H.I."/>
            <person name="Kim N.K."/>
            <person name="Oh D."/>
            <person name="Park H.W."/>
        </authorList>
    </citation>
    <scope>VARIANT LEU-1314</scope>
</reference>
<proteinExistence type="evidence at protein level"/>
<feature type="signal peptide" evidence="3">
    <location>
        <begin position="1"/>
        <end position="29"/>
    </location>
</feature>
<feature type="propeptide" id="PRO_0000247510" evidence="8 9 11">
    <location>
        <begin position="30"/>
        <end position="74"/>
    </location>
</feature>
<feature type="chain" id="PRO_0000247511" description="A disintegrin and metalloproteinase with thrombospondin motifs 13">
    <location>
        <begin position="75"/>
        <end position="1427"/>
    </location>
</feature>
<feature type="domain" description="Peptidase M12B" evidence="5">
    <location>
        <begin position="80"/>
        <end position="286"/>
    </location>
</feature>
<feature type="domain" description="Disintegrin">
    <location>
        <begin position="287"/>
        <end position="383"/>
    </location>
</feature>
<feature type="domain" description="TSP type-1 1" evidence="4">
    <location>
        <begin position="384"/>
        <end position="439"/>
    </location>
</feature>
<feature type="domain" description="TSP type-1 2" evidence="4">
    <location>
        <begin position="682"/>
        <end position="730"/>
    </location>
</feature>
<feature type="domain" description="TSP type-1 3" evidence="4">
    <location>
        <begin position="742"/>
        <end position="805"/>
    </location>
</feature>
<feature type="domain" description="TSP type-1 4" evidence="4">
    <location>
        <begin position="808"/>
        <end position="859"/>
    </location>
</feature>
<feature type="domain" description="TSP type-1 5" evidence="4">
    <location>
        <begin position="896"/>
        <end position="950"/>
    </location>
</feature>
<feature type="domain" description="TSP type-1 6" evidence="4">
    <location>
        <begin position="951"/>
        <end position="1011"/>
    </location>
</feature>
<feature type="domain" description="TSP type-1 7" evidence="4">
    <location>
        <begin position="1012"/>
        <end position="1068"/>
    </location>
</feature>
<feature type="domain" description="TSP type-1 8" evidence="4">
    <location>
        <begin position="1072"/>
        <end position="1131"/>
    </location>
</feature>
<feature type="domain" description="CUB 1">
    <location>
        <begin position="1192"/>
        <end position="1298"/>
    </location>
</feature>
<feature type="domain" description="CUB 2">
    <location>
        <begin position="1299"/>
        <end position="1427"/>
    </location>
</feature>
<feature type="region of interest" description="Disordered" evidence="7">
    <location>
        <begin position="51"/>
        <end position="70"/>
    </location>
</feature>
<feature type="region of interest" description="Cysteine-rich">
    <location>
        <begin position="440"/>
        <end position="556"/>
    </location>
</feature>
<feature type="region of interest" description="Spacer">
    <location>
        <begin position="556"/>
        <end position="685"/>
    </location>
</feature>
<feature type="short sequence motif" description="Cell attachment site" evidence="3">
    <location>
        <begin position="498"/>
        <end position="500"/>
    </location>
</feature>
<feature type="active site" evidence="5 6">
    <location>
        <position position="225"/>
    </location>
</feature>
<feature type="binding site" evidence="3">
    <location>
        <position position="83"/>
    </location>
    <ligand>
        <name>Ca(2+)</name>
        <dbReference type="ChEBI" id="CHEBI:29108"/>
        <label>1</label>
    </ligand>
</feature>
<feature type="binding site" evidence="3">
    <location>
        <position position="173"/>
    </location>
    <ligand>
        <name>Ca(2+)</name>
        <dbReference type="ChEBI" id="CHEBI:29108"/>
        <label>1</label>
    </ligand>
</feature>
<feature type="binding site" evidence="36">
    <location>
        <position position="182"/>
    </location>
    <ligand>
        <name>Ca(2+)</name>
        <dbReference type="ChEBI" id="CHEBI:29108"/>
        <label>2</label>
        <note>high affinity</note>
    </ligand>
</feature>
<feature type="binding site" evidence="36">
    <location>
        <position position="184"/>
    </location>
    <ligand>
        <name>Ca(2+)</name>
        <dbReference type="ChEBI" id="CHEBI:29108"/>
        <label>2</label>
        <note>high affinity</note>
    </ligand>
</feature>
<feature type="binding site" evidence="36">
    <location>
        <position position="187"/>
    </location>
    <ligand>
        <name>Ca(2+)</name>
        <dbReference type="ChEBI" id="CHEBI:29108"/>
        <label>2</label>
        <note>high affinity</note>
    </ligand>
</feature>
<feature type="binding site" evidence="36">
    <location>
        <position position="212"/>
    </location>
    <ligand>
        <name>Ca(2+)</name>
        <dbReference type="ChEBI" id="CHEBI:29108"/>
        <label>2</label>
        <note>high affinity</note>
    </ligand>
</feature>
<feature type="binding site" evidence="2">
    <location>
        <position position="224"/>
    </location>
    <ligand>
        <name>Zn(2+)</name>
        <dbReference type="ChEBI" id="CHEBI:29105"/>
        <note>catalytic</note>
    </ligand>
</feature>
<feature type="binding site" evidence="2">
    <location>
        <position position="228"/>
    </location>
    <ligand>
        <name>Zn(2+)</name>
        <dbReference type="ChEBI" id="CHEBI:29105"/>
        <note>catalytic</note>
    </ligand>
</feature>
<feature type="binding site" evidence="2">
    <location>
        <position position="234"/>
    </location>
    <ligand>
        <name>Zn(2+)</name>
        <dbReference type="ChEBI" id="CHEBI:29105"/>
        <note>catalytic</note>
    </ligand>
</feature>
<feature type="binding site" evidence="3">
    <location>
        <position position="281"/>
    </location>
    <ligand>
        <name>Ca(2+)</name>
        <dbReference type="ChEBI" id="CHEBI:29108"/>
        <label>1</label>
    </ligand>
</feature>
<feature type="binding site" evidence="3">
    <location>
        <position position="284"/>
    </location>
    <ligand>
        <name>Ca(2+)</name>
        <dbReference type="ChEBI" id="CHEBI:29108"/>
        <label>1</label>
    </ligand>
</feature>
<feature type="glycosylation site" description="N-linked (GlcNAc...) asparagine" evidence="3">
    <location>
        <position position="142"/>
    </location>
</feature>
<feature type="glycosylation site" description="N-linked (GlcNAc...) asparagine" evidence="3">
    <location>
        <position position="146"/>
    </location>
</feature>
<feature type="glycosylation site" description="C-linked (Man) tryptophan" evidence="50">
    <location>
        <position position="387"/>
    </location>
</feature>
<feature type="glycosylation site" description="O-linked (Fuc...) serine" evidence="48 49 50">
    <location>
        <position position="399"/>
    </location>
</feature>
<feature type="glycosylation site" description="N-linked (GlcNAc...) asparagine" evidence="40 48 50">
    <location>
        <position position="552"/>
    </location>
</feature>
<feature type="glycosylation site" description="N-linked (GlcNAc...) asparagine" evidence="3">
    <location>
        <position position="579"/>
    </location>
</feature>
<feature type="glycosylation site" description="N-linked (GlcNAc...) asparagine" evidence="27 40 48 49 50">
    <location>
        <position position="614"/>
    </location>
</feature>
<feature type="glycosylation site" description="N-linked (GlcNAc...) (complex) asparagine" evidence="27 39">
    <location>
        <position position="667"/>
    </location>
</feature>
<feature type="glycosylation site" description="O-linked (Fuc...) serine" evidence="34">
    <location>
        <position position="698"/>
    </location>
</feature>
<feature type="glycosylation site" description="N-linked (GlcNAc...) (complex) asparagine" evidence="39">
    <location>
        <position position="707"/>
    </location>
</feature>
<feature type="glycosylation site" description="O-linked (Fuc...) serine" evidence="34">
    <location>
        <position position="757"/>
    </location>
</feature>
<feature type="glycosylation site" description="N-linked (GlcNAc...) asparagine" evidence="3">
    <location>
        <position position="828"/>
    </location>
</feature>
<feature type="glycosylation site" description="O-linked (Fuc...) serine" evidence="34">
    <location>
        <position position="907"/>
    </location>
</feature>
<feature type="glycosylation site" description="O-linked (Fuc...) serine" evidence="34">
    <location>
        <position position="965"/>
    </location>
</feature>
<feature type="glycosylation site" description="O-linked (Fuc...) serine" evidence="34">
    <location>
        <position position="1027"/>
    </location>
</feature>
<feature type="glycosylation site" description="O-linked (Fuc...) serine" evidence="34">
    <location>
        <position position="1087"/>
    </location>
</feature>
<feature type="glycosylation site" description="N-linked (GlcNAc...) asparagine" evidence="3">
    <location>
        <position position="1235"/>
    </location>
</feature>
<feature type="glycosylation site" description="N-linked (GlcNAc...) asparagine" evidence="27">
    <location>
        <position position="1354"/>
    </location>
</feature>
<feature type="disulfide bond" evidence="1">
    <location>
        <begin position="155"/>
        <end position="208"/>
    </location>
</feature>
<feature type="disulfide bond" evidence="1">
    <location>
        <begin position="202"/>
        <end position="281"/>
    </location>
</feature>
<feature type="disulfide bond" evidence="1">
    <location>
        <begin position="242"/>
        <end position="265"/>
    </location>
</feature>
<feature type="disulfide bond" evidence="40 48 49 50">
    <location>
        <begin position="311"/>
        <end position="337"/>
    </location>
</feature>
<feature type="disulfide bond" evidence="40 48 49 50">
    <location>
        <begin position="322"/>
        <end position="347"/>
    </location>
</feature>
<feature type="disulfide bond" evidence="40 48 49 50">
    <location>
        <begin position="332"/>
        <end position="366"/>
    </location>
</feature>
<feature type="disulfide bond" evidence="40 48 49 50">
    <location>
        <begin position="360"/>
        <end position="371"/>
    </location>
</feature>
<feature type="disulfide bond" evidence="40 48 49 50">
    <location>
        <begin position="396"/>
        <end position="433"/>
    </location>
</feature>
<feature type="disulfide bond" evidence="40 48 49 50">
    <location>
        <begin position="400"/>
        <end position="438"/>
    </location>
</feature>
<feature type="disulfide bond" evidence="40 48 49 50">
    <location>
        <begin position="411"/>
        <end position="423"/>
    </location>
</feature>
<feature type="disulfide bond" evidence="48 49 50">
    <location>
        <begin position="450"/>
        <end position="487"/>
    </location>
</feature>
<feature type="disulfide bond" evidence="40 48 49 50">
    <location>
        <begin position="483"/>
        <end position="522"/>
    </location>
</feature>
<feature type="disulfide bond" evidence="40 48 49 50">
    <location>
        <begin position="508"/>
        <end position="527"/>
    </location>
</feature>
<feature type="disulfide bond" evidence="40 48 49 50">
    <location>
        <begin position="532"/>
        <end position="548"/>
    </location>
</feature>
<feature type="disulfide bond" evidence="40 48 49 50">
    <location>
        <begin position="545"/>
        <end position="555"/>
    </location>
</feature>
<feature type="splice variant" id="VSP_055537" description="In isoform 4." evidence="45">
    <location>
        <begin position="2"/>
        <end position="329"/>
    </location>
</feature>
<feature type="splice variant" id="VSP_020002" description="In isoform 3." evidence="44">
    <location>
        <begin position="275"/>
        <end position="305"/>
    </location>
</feature>
<feature type="splice variant" id="VSP_055538" description="In isoform 4." evidence="45">
    <original>YRRYGEEYGNLTRPDITFTYFQPKPRQAWVWAAVR</original>
    <variation>GGVRAQLMHISWWSRPGLGERDLCARGRWPGGSSD</variation>
    <location>
        <begin position="658"/>
        <end position="692"/>
    </location>
</feature>
<feature type="splice variant" id="VSP_055539" description="In isoform 4." evidence="45">
    <location>
        <begin position="693"/>
        <end position="1427"/>
    </location>
</feature>
<feature type="splice variant" id="VSP_020003" description="In isoform 2 and isoform 3." evidence="44">
    <location>
        <begin position="1135"/>
        <end position="1190"/>
    </location>
</feature>
<feature type="sequence variant" id="VAR_027109" description="Does not affect protein secretion; dbSNP:rs34024143." evidence="12 25 43">
    <original>R</original>
    <variation>W</variation>
    <location>
        <position position="7"/>
    </location>
</feature>
<feature type="sequence variant" id="VAR_067770" description="In TTP; dbSNP:rs281875297." evidence="22">
    <original>I</original>
    <variation>M</variation>
    <location>
        <position position="79"/>
    </location>
</feature>
<feature type="sequence variant" id="VAR_027110" description="In TTP; reduces protein secretion and proteolytic activity; dbSNP:rs281875302." evidence="29">
    <original>V</original>
    <variation>M</variation>
    <location>
        <position position="88"/>
    </location>
</feature>
<feature type="sequence variant" id="VAR_027111" description="In TTP; dbSNP:rs121908467." evidence="12">
    <original>H</original>
    <variation>D</variation>
    <location>
        <position position="96"/>
    </location>
</feature>
<feature type="sequence variant" id="VAR_027112" description="In TTP; dbSNP:rs121908469." evidence="12">
    <original>R</original>
    <variation>C</variation>
    <location>
        <position position="102"/>
    </location>
</feature>
<feature type="sequence variant" id="VAR_067771" description="In TTP; dbSNP:rs281875291." evidence="35">
    <original>S</original>
    <variation>F</variation>
    <location>
        <position position="119"/>
    </location>
</feature>
<feature type="sequence variant" id="VAR_067772" description="In TTP; dbSNP:rs281875289." evidence="37">
    <original>I</original>
    <variation>T</variation>
    <location>
        <position position="178"/>
    </location>
</feature>
<feature type="sequence variant" id="VAR_027113" description="In TTP; low activity; dbSNP:rs281875287." evidence="21 37">
    <original>R</original>
    <variation>W</variation>
    <location>
        <position position="193"/>
    </location>
</feature>
<feature type="sequence variant" id="VAR_027114" description="In TTP; dbSNP:rs121908470." evidence="12 20 32">
    <original>T</original>
    <variation>I</variation>
    <location>
        <position position="196"/>
    </location>
</feature>
<feature type="sequence variant" id="VAR_067773" description="In TTP; dbSNP:rs281875298." evidence="22">
    <original>S</original>
    <variation>P</variation>
    <location>
        <position position="203"/>
    </location>
</feature>
<feature type="sequence variant" id="VAR_067774" description="In TTP; dbSNP:rs281875292." evidence="14">
    <original>L</original>
    <variation>Q</variation>
    <location>
        <position position="232"/>
    </location>
</feature>
<feature type="sequence variant" id="VAR_027115" description="In TTP; dbSNP:rs281875304." evidence="28">
    <original>H</original>
    <variation>Q</variation>
    <location>
        <position position="234"/>
    </location>
</feature>
<feature type="sequence variant" id="VAR_067775" description="In TTP; dbSNP:rs281875337." evidence="16">
    <original>D</original>
    <variation>H</variation>
    <location>
        <position position="235"/>
    </location>
</feature>
<feature type="sequence variant" id="VAR_027116" description="In TTP; mild effect on protein secretion; strong reduction of proteolytic activity; dbSNP:rs121908478." evidence="23">
    <original>A</original>
    <variation>V</variation>
    <location>
        <position position="250"/>
    </location>
</feature>
<feature type="sequence variant" id="VAR_067776" description="In TTP; dbSNP:rs281875293." evidence="14 32">
    <original>S</original>
    <variation>C</variation>
    <location>
        <position position="263"/>
    </location>
</feature>
<feature type="sequence variant" id="VAR_027117" description="In TTP; affects protein secretion; dbSNP:rs121908477." evidence="13 22">
    <original>R</original>
    <variation>P</variation>
    <location>
        <position position="268"/>
    </location>
</feature>
<feature type="sequence variant" id="VAR_067777" description="In TTP; dbSNP:rs281875285." evidence="37">
    <original>Y</original>
    <variation>C</variation>
    <location>
        <position position="304"/>
    </location>
</feature>
<feature type="sequence variant" id="VAR_067778" description="In TTP; dbSNP:rs281875336." evidence="16">
    <original>C</original>
    <variation>Y</variation>
    <location>
        <position position="311"/>
    </location>
</feature>
<feature type="sequence variant" id="VAR_067779" description="In dbSNP:rs149517360." evidence="37">
    <original>T</original>
    <variation>R</variation>
    <location>
        <position position="339"/>
    </location>
</feature>
<feature type="sequence variant" id="VAR_067780" description="In TTP; dbSNP:rs281875294." evidence="32">
    <original>C</original>
    <variation>S</variation>
    <location>
        <position position="347"/>
    </location>
</feature>
<feature type="sequence variant" id="VAR_067781" description="In TTP; dbSNP:rs281875288." evidence="37">
    <original>R</original>
    <variation>C</variation>
    <location>
        <position position="349"/>
    </location>
</feature>
<feature type="sequence variant" id="VAR_067782" description="In TTP; dbSNP:rs281875338." evidence="14 16 32">
    <original>P</original>
    <variation>L</variation>
    <location>
        <position position="353"/>
    </location>
</feature>
<feature type="sequence variant" id="VAR_027118" description="In TTP; dbSNP:rs281875306." evidence="24">
    <original>W</original>
    <variation>C</variation>
    <location>
        <position position="390"/>
    </location>
</feature>
<feature type="sequence variant" id="VAR_027119" description="In TTP; dbSNP:rs121908471." evidence="12">
    <original>R</original>
    <variation>H</variation>
    <location>
        <position position="398"/>
    </location>
</feature>
<feature type="sequence variant" id="VAR_027120" description="Does not affect protein secretion; normal proteolytic activity; dbSNP:rs2301612." evidence="12 13 18 20 21 25 33 37 43">
    <original>Q</original>
    <variation>E</variation>
    <location>
        <position position="448"/>
    </location>
</feature>
<feature type="sequence variant" id="VAR_027162" description="In dbSNP:rs36220239." evidence="43">
    <original>Q</original>
    <variation>H</variation>
    <location>
        <position position="456"/>
    </location>
</feature>
<feature type="sequence variant" id="VAR_027163" description="In dbSNP:rs36220240." evidence="16 43">
    <original>P</original>
    <variation>L</variation>
    <location>
        <position position="457"/>
    </location>
</feature>
<feature type="sequence variant" id="VAR_027121" description="In dbSNP:rs11575933." evidence="13">
    <original>P</original>
    <variation>S</variation>
    <location>
        <position position="475"/>
    </location>
</feature>
<feature type="sequence variant" id="VAR_067783" description="In TTP; dbSNP:rs281875296." evidence="22 32">
    <original>R</original>
    <variation>Q</variation>
    <location>
        <position position="507"/>
    </location>
</feature>
<feature type="sequence variant" id="VAR_027122" description="In TTP; impairs protein secretion; dbSNP:rs281875305." evidence="13">
    <original>C</original>
    <variation>Y</variation>
    <location>
        <position position="508"/>
    </location>
</feature>
<feature type="sequence variant" id="VAR_067784" description="In TTP; dbSNP:rs281875286." evidence="37">
    <original>G</original>
    <variation>D</variation>
    <location>
        <position position="525"/>
    </location>
</feature>
<feature type="sequence variant" id="VAR_027123" description="In TTP; dbSNP:rs121908473." evidence="12">
    <original>R</original>
    <variation>G</variation>
    <location>
        <position position="528"/>
    </location>
</feature>
<feature type="sequence variant" id="VAR_067785" description="In TTP; dbSNP:rs281875299." evidence="22">
    <original>A</original>
    <variation>V</variation>
    <location>
        <position position="596"/>
    </location>
</feature>
<feature type="sequence variant" id="VAR_067786" description="In TTP; dbSNP:rs281875290." evidence="37">
    <original>A</original>
    <variation>P</variation>
    <location>
        <position position="606"/>
    </location>
</feature>
<feature type="sequence variant" id="VAR_027124" description="In dbSNP:rs28647808." evidence="12 25 37 43">
    <original>P</original>
    <variation>A</variation>
    <location>
        <position position="618"/>
    </location>
</feature>
<feature type="sequence variant" id="VAR_027125" description="In dbSNP:rs36090624." evidence="12 43">
    <original>R</original>
    <variation>H</variation>
    <location>
        <position position="625"/>
    </location>
</feature>
<feature type="sequence variant" id="VAR_067787" description="In TTP; dbSNP:rs281875335." evidence="42">
    <original>Y</original>
    <variation>C</variation>
    <location>
        <position position="658"/>
    </location>
</feature>
<feature type="sequence variant" id="VAR_067788" description="In TTP; dbSNP:rs281875295." evidence="32">
    <original>P</original>
    <variation>L</variation>
    <location>
        <position position="671"/>
    </location>
</feature>
<feature type="sequence variant" id="VAR_027126" description="In TTP; impairs protein secretion; dbSNP:rs281875307." evidence="21">
    <original>I</original>
    <variation>F</variation>
    <location>
        <position position="673"/>
    </location>
</feature>
<feature type="sequence variant" id="VAR_027127" description="In TTP; dbSNP:rs121908475." evidence="12">
    <original>R</original>
    <variation>C</variation>
    <location>
        <position position="692"/>
    </location>
</feature>
<feature type="sequence variant" id="VAR_027128" description="In dbSNP:rs41314453." evidence="12 15 25">
    <original>A</original>
    <variation>V</variation>
    <location>
        <position position="732"/>
    </location>
</feature>
<feature type="sequence variant" id="VAR_027164" description="In dbSNP:rs36221451." evidence="43">
    <original>E</original>
    <variation>K</variation>
    <location>
        <position position="740"/>
    </location>
</feature>
<feature type="sequence variant" id="VAR_067789" description="In TTP; dbSNP:rs281875300." evidence="22">
    <original>C</original>
    <variation>R</variation>
    <location>
        <position position="758"/>
    </location>
</feature>
<feature type="sequence variant" id="VAR_027129" description="In dbSNP:rs685523." evidence="10 12 43">
    <original>A</original>
    <variation>V</variation>
    <location>
        <position position="900"/>
    </location>
</feature>
<feature type="sequence variant" id="VAR_027130" description="In dbSNP:rs78977446." evidence="28 30">
    <original>S</original>
    <variation>L</variation>
    <location>
        <position position="903"/>
    </location>
</feature>
<feature type="sequence variant" id="VAR_067790" description="In TTP; dbSNP:rs281875301." evidence="22">
    <original>C</original>
    <variation>S</variation>
    <location>
        <position position="908"/>
    </location>
</feature>
<feature type="sequence variant" id="VAR_027131" description="In TTP; impairs protein secretion; dbSNP:rs281875301." evidence="21">
    <original>C</original>
    <variation>Y</variation>
    <location>
        <position position="908"/>
    </location>
</feature>
<feature type="sequence variant" id="VAR_027132" description="In TTP; dbSNP:rs121908468." evidence="12">
    <original>C</original>
    <variation>G</variation>
    <location>
        <position position="951"/>
    </location>
</feature>
<feature type="sequence variant" id="VAR_067791" description="In TTP." evidence="38">
    <original>CAR</original>
    <variation>W</variation>
    <location>
        <begin position="977"/>
        <end position="979"/>
    </location>
</feature>
<feature type="sequence variant" id="VAR_027165" description="In dbSNP:rs36222275." evidence="43">
    <original>G</original>
    <variation>R</variation>
    <location>
        <position position="982"/>
    </location>
</feature>
<feature type="sequence variant" id="VAR_027133" description="In TTP; dbSNP:rs121908472." evidence="12">
    <original>C</original>
    <variation>G</variation>
    <location>
        <position position="1024"/>
    </location>
</feature>
<feature type="sequence variant" id="VAR_027134" description="In dbSNP:rs28503257." evidence="12 43">
    <original>A</original>
    <variation>T</variation>
    <location>
        <position position="1033"/>
    </location>
</feature>
<feature type="sequence variant" id="VAR_067792" description="In TTP; affects protein secretion; the mutant protein has reduced protease activity; dbSNP:rs142572218." evidence="31 32 33">
    <original>R</original>
    <variation>W</variation>
    <location>
        <position position="1060"/>
    </location>
</feature>
<feature type="sequence variant" id="VAR_027135" description="In a patient with thrombotic thrombocytopenic purpura; dbSNP:rs782383410." evidence="30">
    <original>R</original>
    <variation>W</variation>
    <location>
        <position position="1095"/>
    </location>
</feature>
<feature type="sequence variant" id="VAR_027136" description="In TTP; impairs protein secretion; the mutant protein has reduced protease activity; dbSNP:rs281875340." evidence="21 33">
    <original>R</original>
    <variation>C</variation>
    <location>
        <position position="1123"/>
    </location>
</feature>
<feature type="sequence variant" id="VAR_027137" description="In TTP; dbSNP:rs121908474." evidence="12">
    <original>C</original>
    <variation>Y</variation>
    <location>
        <position position="1213"/>
    </location>
</feature>
<feature type="sequence variant" id="VAR_067793" description="In TTP; affects protein secretion; the mutant protein has reduced protease activity; dbSNP:rs281875339." evidence="33">
    <original>R</original>
    <variation>W</variation>
    <location>
        <position position="1219"/>
    </location>
</feature>
<feature type="sequence variant" id="VAR_027166" description="In dbSNP:rs36222894." evidence="43">
    <original>T</original>
    <variation>I</variation>
    <location>
        <position position="1226"/>
    </location>
</feature>
<feature type="sequence variant" id="VAR_027138" description="In TTP; impairs protein secretion; dbSNP:rs281875303." evidence="29">
    <original>G</original>
    <variation>V</variation>
    <location>
        <position position="1239"/>
    </location>
</feature>
<feature type="sequence variant" id="VAR_067794" description="Found in a patient with hemolytic uremic syndrome; dbSNP:rs142060916." evidence="41">
    <original>S</original>
    <variation>L</variation>
    <location>
        <position position="1314"/>
    </location>
</feature>
<feature type="sequence variant" id="VAR_027139" description="In TTP; impairs protein secretion and proteolytic activity; dbSNP:rs281875308." evidence="15 25">
    <original>R</original>
    <variation>W</variation>
    <location>
        <position position="1336"/>
    </location>
</feature>
<feature type="mutagenesis site" description="Abolishes pro-domain removal but no loss of proteolytic activity; when associated with D-73." evidence="19">
    <original>R</original>
    <variation>K</variation>
    <location>
        <position position="71"/>
    </location>
</feature>
<feature type="mutagenesis site" description="Abolishes pro-domain removal but no loss of proteolytic activity; when associated with K-71." evidence="19">
    <original>R</original>
    <variation>D</variation>
    <location>
        <position position="73"/>
    </location>
</feature>
<feature type="mutagenesis site" description="No change in calcium dependence for proteolysis." evidence="36">
    <original>E</original>
    <variation>A</variation>
    <location>
        <position position="83"/>
    </location>
</feature>
<feature type="mutagenesis site" description="No change in calcium dependence for proteolysis." evidence="36">
    <original>D</original>
    <variation>A</variation>
    <location>
        <position position="173"/>
    </location>
</feature>
<feature type="mutagenesis site" description="Dramatically reduced affinity for calcium." evidence="36">
    <original>E</original>
    <variation>A</variation>
    <location>
        <position position="184"/>
    </location>
</feature>
<feature type="mutagenesis site" description="Dramatically reduced affinity for calcium." evidence="36">
    <original>D</original>
    <variation>A</variation>
    <location>
        <position position="187"/>
    </location>
</feature>
<feature type="mutagenesis site" description="Dramatically reduced affinity for calcium." evidence="36">
    <original>E</original>
    <variation>A</variation>
    <location>
        <position position="212"/>
    </location>
</feature>
<feature type="mutagenesis site" description="No effect on cleavage of VWF and little change in secretion of ADAMTS13. Abolishes secretion of ADAMTS13; when associated with A-698." evidence="34">
    <original>S</original>
    <variation>A</variation>
    <location>
        <position position="399"/>
    </location>
</feature>
<feature type="mutagenesis site" description="No effect on cleavage of VWF and greatly reduced secretion of ADAMTS13. Abolishes secretion of ADAMTS13; when associated with A-399." evidence="34">
    <original>S</original>
    <variation>A</variation>
    <location>
        <position position="698"/>
    </location>
</feature>
<feature type="mutagenesis site" description="No effect on cleavage of VWF and little change in secretion of ADAMTS13." evidence="34">
    <original>S</original>
    <variation>A</variation>
    <location>
        <position position="757"/>
    </location>
</feature>
<feature type="mutagenesis site" description="No effect on cleavage of VWF and greatly reduced secretion of ADAMTS13. Abolishes most of the secretion of ADAMTS13; when associated with A-965." evidence="34">
    <original>S</original>
    <variation>A</variation>
    <location>
        <position position="907"/>
    </location>
</feature>
<feature type="mutagenesis site" description="No effect on cleavage of VWF and little change in secretion of ADAMTS13. Abolishes most of the secretion of ADAMTS13; when associated with A-907." evidence="34">
    <original>S</original>
    <variation>A</variation>
    <location>
        <position position="965"/>
    </location>
</feature>
<feature type="mutagenesis site" description="No effect on cleavage of VWF and little change in secretion of ADAMTS13. Abolishes most of the secretion of ADAMTS13; when associated with A-1087." evidence="34">
    <original>S</original>
    <variation>A</variation>
    <location>
        <position position="1027"/>
    </location>
</feature>
<feature type="mutagenesis site" description="No effect on cleavage of VWF and little change in secretion of ADAMTS13. Abolishes most of the secretion of ADAMTS13; when associated with A-1027." evidence="34">
    <original>S</original>
    <variation>A</variation>
    <location>
        <position position="1087"/>
    </location>
</feature>
<feature type="sequence conflict" description="In Ref. 1; AA sequence." evidence="46" ref="1">
    <original>E</original>
    <variation>R</variation>
    <location>
        <position position="101"/>
    </location>
</feature>
<feature type="strand" evidence="54">
    <location>
        <begin position="80"/>
        <end position="88"/>
    </location>
</feature>
<feature type="helix" evidence="54">
    <location>
        <begin position="90"/>
        <end position="95"/>
    </location>
</feature>
<feature type="strand" evidence="54">
    <location>
        <begin position="96"/>
        <end position="98"/>
    </location>
</feature>
<feature type="helix" evidence="54">
    <location>
        <begin position="100"/>
        <end position="114"/>
    </location>
</feature>
<feature type="helix" evidence="54">
    <location>
        <begin position="118"/>
        <end position="120"/>
    </location>
</feature>
<feature type="strand" evidence="54">
    <location>
        <begin position="124"/>
        <end position="128"/>
    </location>
</feature>
<feature type="helix" evidence="54">
    <location>
        <begin position="147"/>
        <end position="157"/>
    </location>
</feature>
<feature type="turn" evidence="54">
    <location>
        <begin position="158"/>
        <end position="160"/>
    </location>
</feature>
<feature type="strand" evidence="54">
    <location>
        <begin position="173"/>
        <end position="179"/>
    </location>
</feature>
<feature type="strand" evidence="54">
    <location>
        <begin position="194"/>
        <end position="196"/>
    </location>
</feature>
<feature type="strand" evidence="54">
    <location>
        <begin position="204"/>
        <end position="206"/>
    </location>
</feature>
<feature type="strand" evidence="54">
    <location>
        <begin position="209"/>
        <end position="212"/>
    </location>
</feature>
<feature type="helix" evidence="54">
    <location>
        <begin position="218"/>
        <end position="230"/>
    </location>
</feature>
<feature type="strand" evidence="54">
    <location>
        <begin position="244"/>
        <end position="247"/>
    </location>
</feature>
<feature type="helix" evidence="54">
    <location>
        <begin position="264"/>
        <end position="275"/>
    </location>
</feature>
<feature type="helix" evidence="51">
    <location>
        <begin position="301"/>
        <end position="303"/>
    </location>
</feature>
<feature type="helix" evidence="51">
    <location>
        <begin position="307"/>
        <end position="314"/>
    </location>
</feature>
<feature type="strand" evidence="54">
    <location>
        <begin position="327"/>
        <end position="329"/>
    </location>
</feature>
<feature type="helix" evidence="52">
    <location>
        <begin position="331"/>
        <end position="334"/>
    </location>
</feature>
<feature type="strand" evidence="51">
    <location>
        <begin position="337"/>
        <end position="340"/>
    </location>
</feature>
<feature type="strand" evidence="53">
    <location>
        <begin position="348"/>
        <end position="351"/>
    </location>
</feature>
<feature type="strand" evidence="51">
    <location>
        <begin position="359"/>
        <end position="361"/>
    </location>
</feature>
<feature type="strand" evidence="51">
    <location>
        <begin position="364"/>
        <end position="367"/>
    </location>
</feature>
<feature type="strand" evidence="51">
    <location>
        <begin position="370"/>
        <end position="373"/>
    </location>
</feature>
<feature type="helix" evidence="51">
    <location>
        <begin position="374"/>
        <end position="377"/>
    </location>
</feature>
<feature type="strand" evidence="51">
    <location>
        <begin position="399"/>
        <end position="401"/>
    </location>
</feature>
<feature type="strand" evidence="51">
    <location>
        <begin position="403"/>
        <end position="406"/>
    </location>
</feature>
<feature type="strand" evidence="51">
    <location>
        <begin position="417"/>
        <end position="419"/>
    </location>
</feature>
<feature type="strand" evidence="51">
    <location>
        <begin position="430"/>
        <end position="433"/>
    </location>
</feature>
<feature type="helix" evidence="51">
    <location>
        <begin position="442"/>
        <end position="451"/>
    </location>
</feature>
<feature type="turn" evidence="51">
    <location>
        <begin position="452"/>
        <end position="455"/>
    </location>
</feature>
<feature type="strand" evidence="51">
    <location>
        <begin position="470"/>
        <end position="472"/>
    </location>
</feature>
<feature type="turn" evidence="51">
    <location>
        <begin position="474"/>
        <end position="476"/>
    </location>
</feature>
<feature type="helix" evidence="51">
    <location>
        <begin position="479"/>
        <end position="483"/>
    </location>
</feature>
<feature type="strand" evidence="51">
    <location>
        <begin position="486"/>
        <end position="489"/>
    </location>
</feature>
<feature type="strand" evidence="51">
    <location>
        <begin position="495"/>
        <end position="497"/>
    </location>
</feature>
<feature type="strand" evidence="51">
    <location>
        <begin position="519"/>
        <end position="523"/>
    </location>
</feature>
<feature type="strand" evidence="51">
    <location>
        <begin position="526"/>
        <end position="530"/>
    </location>
</feature>
<feature type="strand" evidence="51">
    <location>
        <begin position="534"/>
        <end position="536"/>
    </location>
</feature>
<feature type="strand" evidence="51">
    <location>
        <begin position="554"/>
        <end position="562"/>
    </location>
</feature>
<feature type="strand" evidence="51">
    <location>
        <begin position="569"/>
        <end position="576"/>
    </location>
</feature>
<feature type="strand" evidence="51">
    <location>
        <begin position="581"/>
        <end position="588"/>
    </location>
</feature>
<feature type="strand" evidence="51">
    <location>
        <begin position="592"/>
        <end position="599"/>
    </location>
</feature>
<feature type="strand" evidence="51">
    <location>
        <begin position="602"/>
        <end position="605"/>
    </location>
</feature>
<feature type="strand" evidence="51">
    <location>
        <begin position="608"/>
        <end position="610"/>
    </location>
</feature>
<feature type="strand" evidence="51">
    <location>
        <begin position="614"/>
        <end position="618"/>
    </location>
</feature>
<feature type="strand" evidence="51">
    <location>
        <begin position="623"/>
        <end position="632"/>
    </location>
</feature>
<feature type="strand" evidence="51">
    <location>
        <begin position="634"/>
        <end position="636"/>
    </location>
</feature>
<feature type="strand" evidence="51">
    <location>
        <begin position="638"/>
        <end position="647"/>
    </location>
</feature>
<feature type="strand" evidence="51">
    <location>
        <begin position="653"/>
        <end position="661"/>
    </location>
</feature>
<feature type="helix" evidence="51">
    <location>
        <begin position="663"/>
        <end position="665"/>
    </location>
</feature>
<feature type="helix" evidence="52">
    <location>
        <begin position="667"/>
        <end position="669"/>
    </location>
</feature>
<feature type="strand" evidence="51">
    <location>
        <begin position="673"/>
        <end position="680"/>
    </location>
</feature>
<feature type="strand" evidence="55">
    <location>
        <begin position="1199"/>
        <end position="1204"/>
    </location>
</feature>
<feature type="strand" evidence="55">
    <location>
        <begin position="1209"/>
        <end position="1212"/>
    </location>
</feature>
<feature type="strand" evidence="55">
    <location>
        <begin position="1216"/>
        <end position="1218"/>
    </location>
</feature>
<feature type="strand" evidence="55">
    <location>
        <begin position="1223"/>
        <end position="1232"/>
    </location>
</feature>
<feature type="strand" evidence="55">
    <location>
        <begin position="1236"/>
        <end position="1239"/>
    </location>
</feature>
<feature type="strand" evidence="55">
    <location>
        <begin position="1241"/>
        <end position="1245"/>
    </location>
</feature>
<feature type="strand" evidence="55">
    <location>
        <begin position="1261"/>
        <end position="1263"/>
    </location>
</feature>
<feature type="strand" evidence="55">
    <location>
        <begin position="1265"/>
        <end position="1274"/>
    </location>
</feature>
<feature type="strand" evidence="55">
    <location>
        <begin position="1282"/>
        <end position="1290"/>
    </location>
</feature>
<feature type="turn" evidence="55">
    <location>
        <begin position="1297"/>
        <end position="1299"/>
    </location>
</feature>
<feature type="strand" evidence="55">
    <location>
        <begin position="1305"/>
        <end position="1311"/>
    </location>
</feature>
<feature type="strand" evidence="55">
    <location>
        <begin position="1317"/>
        <end position="1319"/>
    </location>
</feature>
<feature type="strand" evidence="55">
    <location>
        <begin position="1326"/>
        <end position="1328"/>
    </location>
</feature>
<feature type="strand" evidence="55">
    <location>
        <begin position="1336"/>
        <end position="1344"/>
    </location>
</feature>
<feature type="strand" evidence="55">
    <location>
        <begin position="1357"/>
        <end position="1361"/>
    </location>
</feature>
<feature type="strand" evidence="55">
    <location>
        <begin position="1369"/>
        <end position="1373"/>
    </location>
</feature>
<feature type="strand" evidence="55">
    <location>
        <begin position="1375"/>
        <end position="1380"/>
    </location>
</feature>
<feature type="strand" evidence="55">
    <location>
        <begin position="1382"/>
        <end position="1384"/>
    </location>
</feature>
<feature type="strand" evidence="55">
    <location>
        <begin position="1387"/>
        <end position="1390"/>
    </location>
</feature>
<feature type="helix" evidence="55">
    <location>
        <begin position="1392"/>
        <end position="1396"/>
    </location>
</feature>
<feature type="strand" evidence="55">
    <location>
        <begin position="1400"/>
        <end position="1409"/>
    </location>
</feature>
<accession>Q76LX8</accession>
<accession>Q6UY16</accession>
<accession>Q710F6</accession>
<accession>Q711T8</accession>
<accession>Q96L37</accession>
<accession>Q9H0G3</accession>
<accession>Q9UGQ1</accession>